<evidence type="ECO:0000255" key="1">
    <source>
        <dbReference type="PROSITE-ProRule" id="PRU00192"/>
    </source>
</evidence>
<evidence type="ECO:0000255" key="2">
    <source>
        <dbReference type="PROSITE-ProRule" id="PRU00563"/>
    </source>
</evidence>
<evidence type="ECO:0000256" key="3">
    <source>
        <dbReference type="SAM" id="MobiDB-lite"/>
    </source>
</evidence>
<evidence type="ECO:0000269" key="4">
    <source>
    </source>
</evidence>
<evidence type="ECO:0000269" key="5">
    <source>
    </source>
</evidence>
<evidence type="ECO:0000269" key="6">
    <source>
    </source>
</evidence>
<evidence type="ECO:0000269" key="7">
    <source>
    </source>
</evidence>
<evidence type="ECO:0000269" key="8">
    <source>
    </source>
</evidence>
<evidence type="ECO:0000269" key="9">
    <source>
    </source>
</evidence>
<evidence type="ECO:0000269" key="10">
    <source>
    </source>
</evidence>
<evidence type="ECO:0000269" key="11">
    <source>
    </source>
</evidence>
<evidence type="ECO:0000269" key="12">
    <source>
    </source>
</evidence>
<evidence type="ECO:0000269" key="13">
    <source>
    </source>
</evidence>
<evidence type="ECO:0000305" key="14"/>
<evidence type="ECO:0007829" key="15">
    <source>
        <dbReference type="PDB" id="1ARK"/>
    </source>
</evidence>
<evidence type="ECO:0007829" key="16">
    <source>
        <dbReference type="PDB" id="6Y17"/>
    </source>
</evidence>
<gene>
    <name type="primary">NEB</name>
</gene>
<organism>
    <name type="scientific">Homo sapiens</name>
    <name type="common">Human</name>
    <dbReference type="NCBI Taxonomy" id="9606"/>
    <lineage>
        <taxon>Eukaryota</taxon>
        <taxon>Metazoa</taxon>
        <taxon>Chordata</taxon>
        <taxon>Craniata</taxon>
        <taxon>Vertebrata</taxon>
        <taxon>Euteleostomi</taxon>
        <taxon>Mammalia</taxon>
        <taxon>Eutheria</taxon>
        <taxon>Euarchontoglires</taxon>
        <taxon>Primates</taxon>
        <taxon>Haplorrhini</taxon>
        <taxon>Catarrhini</taxon>
        <taxon>Hominidae</taxon>
        <taxon>Homo</taxon>
    </lineage>
</organism>
<protein>
    <recommendedName>
        <fullName>Nebulin</fullName>
    </recommendedName>
</protein>
<name>NEBU_HUMAN</name>
<proteinExistence type="evidence at protein level"/>
<dbReference type="EMBL" id="X83957">
    <property type="protein sequence ID" value="CAA58788.1"/>
    <property type="molecule type" value="mRNA"/>
</dbReference>
<dbReference type="EMBL" id="AC009497">
    <property type="protein sequence ID" value="AAY14651.1"/>
    <property type="molecule type" value="Genomic_DNA"/>
</dbReference>
<dbReference type="EMBL" id="AC107052">
    <property type="protein sequence ID" value="AAY14977.1"/>
    <property type="molecule type" value="Genomic_DNA"/>
</dbReference>
<dbReference type="EMBL" id="AC116650">
    <property type="status" value="NOT_ANNOTATED_CDS"/>
    <property type="molecule type" value="Genomic_DNA"/>
</dbReference>
<dbReference type="EMBL" id="M19669">
    <property type="protein sequence ID" value="AAA59917.1"/>
    <property type="molecule type" value="mRNA"/>
</dbReference>
<dbReference type="CCDS" id="CCDS46424.1">
    <molecule id="P20929-4"/>
</dbReference>
<dbReference type="CCDS" id="CCDS54407.1">
    <molecule id="P20929-2"/>
</dbReference>
<dbReference type="CCDS" id="CCDS54408.1">
    <molecule id="P20929-3"/>
</dbReference>
<dbReference type="PIR" id="A29979">
    <property type="entry name" value="A29979"/>
</dbReference>
<dbReference type="PIR" id="B29979">
    <property type="entry name" value="B29979"/>
</dbReference>
<dbReference type="PIR" id="S55024">
    <property type="entry name" value="S55024"/>
</dbReference>
<dbReference type="RefSeq" id="NP_001157979.2">
    <molecule id="P20929-3"/>
    <property type="nucleotide sequence ID" value="NM_001164507.2"/>
</dbReference>
<dbReference type="RefSeq" id="NP_001157980.2">
    <molecule id="P20929-2"/>
    <property type="nucleotide sequence ID" value="NM_001164508.2"/>
</dbReference>
<dbReference type="RefSeq" id="NP_004534.3">
    <molecule id="P20929-4"/>
    <property type="nucleotide sequence ID" value="NM_004543.5"/>
</dbReference>
<dbReference type="PDB" id="1ARK">
    <property type="method" value="NMR"/>
    <property type="chains" value="A=8466-8525"/>
</dbReference>
<dbReference type="PDB" id="1NEB">
    <property type="method" value="NMR"/>
    <property type="chains" value="A=8466-8525"/>
</dbReference>
<dbReference type="PDB" id="6Y17">
    <property type="method" value="X-ray"/>
    <property type="resolution" value="1.56 A"/>
    <property type="chains" value="C/D=8466-8525"/>
</dbReference>
<dbReference type="PDBsum" id="1ARK"/>
<dbReference type="PDBsum" id="1NEB"/>
<dbReference type="PDBsum" id="6Y17"/>
<dbReference type="SMR" id="P20929"/>
<dbReference type="BioGRID" id="110783">
    <property type="interactions" value="95"/>
</dbReference>
<dbReference type="FunCoup" id="P20929">
    <property type="interactions" value="96"/>
</dbReference>
<dbReference type="IntAct" id="P20929">
    <property type="interactions" value="42"/>
</dbReference>
<dbReference type="MINT" id="P20929"/>
<dbReference type="STRING" id="9606.ENSP00000484342"/>
<dbReference type="CarbonylDB" id="P20929"/>
<dbReference type="GlyGen" id="P20929">
    <property type="glycosylation" value="2 sites, 1 O-linked glycan (2 sites)"/>
</dbReference>
<dbReference type="iPTMnet" id="P20929"/>
<dbReference type="PhosphoSitePlus" id="P20929"/>
<dbReference type="SwissPalm" id="P20929"/>
<dbReference type="BioMuta" id="NEB"/>
<dbReference type="DMDM" id="313104310"/>
<dbReference type="jPOST" id="P20929"/>
<dbReference type="MassIVE" id="P20929"/>
<dbReference type="PeptideAtlas" id="P20929"/>
<dbReference type="ProteomicsDB" id="31194"/>
<dbReference type="ProteomicsDB" id="31219"/>
<dbReference type="ProteomicsDB" id="53825">
    <molecule id="P20929-1"/>
</dbReference>
<dbReference type="Antibodypedia" id="1171">
    <property type="antibodies" value="118 antibodies from 26 providers"/>
</dbReference>
<dbReference type="DNASU" id="4703"/>
<dbReference type="Ensembl" id="ENST00000397345.8">
    <molecule id="P20929-2"/>
    <property type="protein sequence ID" value="ENSP00000380505.3"/>
    <property type="gene ID" value="ENSG00000183091.21"/>
</dbReference>
<dbReference type="Ensembl" id="ENST00000409198.5">
    <molecule id="P20929-4"/>
    <property type="protein sequence ID" value="ENSP00000386259.1"/>
    <property type="gene ID" value="ENSG00000183091.21"/>
</dbReference>
<dbReference type="Ensembl" id="ENST00000427231.7">
    <molecule id="P20929-3"/>
    <property type="protein sequence ID" value="ENSP00000416578.2"/>
    <property type="gene ID" value="ENSG00000183091.21"/>
</dbReference>
<dbReference type="GeneID" id="4703"/>
<dbReference type="KEGG" id="hsa:4703"/>
<dbReference type="MANE-Select" id="ENST00000397345.8">
    <property type="protein sequence ID" value="ENSP00000380505.3"/>
    <property type="RefSeq nucleotide sequence ID" value="NM_001164508.2"/>
    <property type="RefSeq protein sequence ID" value="NP_001157980.2"/>
</dbReference>
<dbReference type="UCSC" id="uc002txu.3">
    <molecule id="P20929-2"/>
    <property type="organism name" value="human"/>
</dbReference>
<dbReference type="AGR" id="HGNC:7720"/>
<dbReference type="CTD" id="4703"/>
<dbReference type="DisGeNET" id="4703"/>
<dbReference type="GeneCards" id="NEB"/>
<dbReference type="HGNC" id="HGNC:7720">
    <property type="gene designation" value="NEB"/>
</dbReference>
<dbReference type="HPA" id="ENSG00000183091">
    <property type="expression patterns" value="Group enriched (skeletal muscle, tongue)"/>
</dbReference>
<dbReference type="MalaCards" id="NEB"/>
<dbReference type="MIM" id="161650">
    <property type="type" value="gene"/>
</dbReference>
<dbReference type="MIM" id="256030">
    <property type="type" value="phenotype"/>
</dbReference>
<dbReference type="MIM" id="619334">
    <property type="type" value="phenotype"/>
</dbReference>
<dbReference type="neXtProt" id="NX_P20929"/>
<dbReference type="OpenTargets" id="ENSG00000183091"/>
<dbReference type="Orphanet" id="171439">
    <property type="disease" value="Childhood-onset nemaline myopathy"/>
</dbReference>
<dbReference type="Orphanet" id="399103">
    <property type="disease" value="Distal nebulin myopathy"/>
</dbReference>
<dbReference type="Orphanet" id="171433">
    <property type="disease" value="Intermediate nemaline myopathy"/>
</dbReference>
<dbReference type="Orphanet" id="33108">
    <property type="disease" value="Lethal multiple pterygium syndrome"/>
</dbReference>
<dbReference type="Orphanet" id="171430">
    <property type="disease" value="Severe congenital nemaline myopathy"/>
</dbReference>
<dbReference type="Orphanet" id="171436">
    <property type="disease" value="Typical nemaline myopathy"/>
</dbReference>
<dbReference type="PharmGKB" id="PA31530"/>
<dbReference type="VEuPathDB" id="HostDB:ENSG00000183091"/>
<dbReference type="GeneTree" id="ENSGT00940000154533"/>
<dbReference type="HOGENOM" id="CLU_000024_0_0_1"/>
<dbReference type="InParanoid" id="P20929"/>
<dbReference type="OrthoDB" id="9295290at2759"/>
<dbReference type="PAN-GO" id="P20929">
    <property type="GO annotations" value="3 GO annotations based on evolutionary models"/>
</dbReference>
<dbReference type="TreeFam" id="TF319104"/>
<dbReference type="PathwayCommons" id="P20929"/>
<dbReference type="Reactome" id="R-HSA-390522">
    <property type="pathway name" value="Striated Muscle Contraction"/>
</dbReference>
<dbReference type="SignaLink" id="P20929"/>
<dbReference type="SIGNOR" id="P20929"/>
<dbReference type="BioGRID-ORCS" id="4703">
    <property type="hits" value="13 hits in 1141 CRISPR screens"/>
</dbReference>
<dbReference type="ChiTaRS" id="NEB">
    <property type="organism name" value="human"/>
</dbReference>
<dbReference type="EvolutionaryTrace" id="P20929"/>
<dbReference type="GenomeRNAi" id="4703"/>
<dbReference type="Pharos" id="P20929">
    <property type="development level" value="Tbio"/>
</dbReference>
<dbReference type="PRO" id="PR:P20929"/>
<dbReference type="Proteomes" id="UP000005640">
    <property type="component" value="Chromosome 2"/>
</dbReference>
<dbReference type="RNAct" id="P20929">
    <property type="molecule type" value="protein"/>
</dbReference>
<dbReference type="Bgee" id="ENSG00000183091">
    <property type="expression patterns" value="Expressed in gluteal muscle and 126 other cell types or tissues"/>
</dbReference>
<dbReference type="ExpressionAtlas" id="P20929">
    <property type="expression patterns" value="baseline and differential"/>
</dbReference>
<dbReference type="GO" id="GO:0015629">
    <property type="term" value="C:actin cytoskeleton"/>
    <property type="evidence" value="ECO:0000304"/>
    <property type="project" value="ProtInc"/>
</dbReference>
<dbReference type="GO" id="GO:0005829">
    <property type="term" value="C:cytosol"/>
    <property type="evidence" value="ECO:0000304"/>
    <property type="project" value="Reactome"/>
</dbReference>
<dbReference type="GO" id="GO:0070062">
    <property type="term" value="C:extracellular exosome"/>
    <property type="evidence" value="ECO:0007005"/>
    <property type="project" value="UniProtKB"/>
</dbReference>
<dbReference type="GO" id="GO:0030018">
    <property type="term" value="C:Z disc"/>
    <property type="evidence" value="ECO:0000314"/>
    <property type="project" value="UniProtKB"/>
</dbReference>
<dbReference type="GO" id="GO:0051015">
    <property type="term" value="F:actin filament binding"/>
    <property type="evidence" value="ECO:0000318"/>
    <property type="project" value="GO_Central"/>
</dbReference>
<dbReference type="GO" id="GO:0008307">
    <property type="term" value="F:structural constituent of muscle"/>
    <property type="evidence" value="ECO:0000304"/>
    <property type="project" value="ProtInc"/>
</dbReference>
<dbReference type="GO" id="GO:0071691">
    <property type="term" value="P:cardiac muscle thin filament assembly"/>
    <property type="evidence" value="ECO:0000318"/>
    <property type="project" value="GO_Central"/>
</dbReference>
<dbReference type="GO" id="GO:0007517">
    <property type="term" value="P:muscle organ development"/>
    <property type="evidence" value="ECO:0000304"/>
    <property type="project" value="ProtInc"/>
</dbReference>
<dbReference type="GO" id="GO:0030832">
    <property type="term" value="P:regulation of actin filament length"/>
    <property type="evidence" value="ECO:0000303"/>
    <property type="project" value="UniProtKB"/>
</dbReference>
<dbReference type="GO" id="GO:0007525">
    <property type="term" value="P:somatic muscle development"/>
    <property type="evidence" value="ECO:0000303"/>
    <property type="project" value="UniProtKB"/>
</dbReference>
<dbReference type="CDD" id="cd11933">
    <property type="entry name" value="SH3_Nebulin_C"/>
    <property type="match status" value="1"/>
</dbReference>
<dbReference type="FunFam" id="2.30.30.40:FF:000007">
    <property type="entry name" value="nebulin isoform X1"/>
    <property type="match status" value="1"/>
</dbReference>
<dbReference type="Gene3D" id="2.30.30.40">
    <property type="entry name" value="SH3 Domains"/>
    <property type="match status" value="1"/>
</dbReference>
<dbReference type="InterPro" id="IPR055297">
    <property type="entry name" value="NEBU/NEBL"/>
</dbReference>
<dbReference type="InterPro" id="IPR013998">
    <property type="entry name" value="Nebulin-like"/>
</dbReference>
<dbReference type="InterPro" id="IPR000900">
    <property type="entry name" value="Nebulin_repeat"/>
</dbReference>
<dbReference type="InterPro" id="IPR035629">
    <property type="entry name" value="Nebulin_SH3"/>
</dbReference>
<dbReference type="InterPro" id="IPR036028">
    <property type="entry name" value="SH3-like_dom_sf"/>
</dbReference>
<dbReference type="InterPro" id="IPR001452">
    <property type="entry name" value="SH3_domain"/>
</dbReference>
<dbReference type="PANTHER" id="PTHR11039">
    <property type="entry name" value="NEBULIN"/>
    <property type="match status" value="1"/>
</dbReference>
<dbReference type="PANTHER" id="PTHR11039:SF64">
    <property type="entry name" value="NEBULIN-RELATED-ANCHORING PROTEIN-LIKE"/>
    <property type="match status" value="1"/>
</dbReference>
<dbReference type="Pfam" id="PF00880">
    <property type="entry name" value="Nebulin"/>
    <property type="match status" value="139"/>
</dbReference>
<dbReference type="Pfam" id="PF14604">
    <property type="entry name" value="SH3_9"/>
    <property type="match status" value="1"/>
</dbReference>
<dbReference type="PRINTS" id="PR00510">
    <property type="entry name" value="NEBULIN"/>
</dbReference>
<dbReference type="SMART" id="SM00227">
    <property type="entry name" value="NEBU"/>
    <property type="match status" value="235"/>
</dbReference>
<dbReference type="SMART" id="SM00326">
    <property type="entry name" value="SH3"/>
    <property type="match status" value="1"/>
</dbReference>
<dbReference type="SUPFAM" id="SSF50044">
    <property type="entry name" value="SH3-domain"/>
    <property type="match status" value="1"/>
</dbReference>
<dbReference type="PROSITE" id="PS51216">
    <property type="entry name" value="NEBULIN"/>
    <property type="match status" value="181"/>
</dbReference>
<dbReference type="PROSITE" id="PS50002">
    <property type="entry name" value="SH3"/>
    <property type="match status" value="1"/>
</dbReference>
<feature type="chain" id="PRO_0000096775" description="Nebulin">
    <location>
        <begin position="1"/>
        <end position="8525"/>
    </location>
</feature>
<feature type="repeat" description="Nebulin 1" evidence="2">
    <location>
        <begin position="83"/>
        <end position="110"/>
    </location>
</feature>
<feature type="repeat" description="Nebulin 2" evidence="2">
    <location>
        <begin position="112"/>
        <end position="146"/>
    </location>
</feature>
<feature type="repeat" description="Nebulin 3" evidence="2">
    <location>
        <begin position="156"/>
        <end position="181"/>
    </location>
</feature>
<feature type="repeat" description="Nebulin 4" evidence="2">
    <location>
        <begin position="182"/>
        <end position="216"/>
    </location>
</feature>
<feature type="repeat" description="Nebulin 5" evidence="2">
    <location>
        <begin position="217"/>
        <end position="251"/>
    </location>
</feature>
<feature type="repeat" description="Nebulin 6" evidence="2">
    <location>
        <begin position="252"/>
        <end position="286"/>
    </location>
</feature>
<feature type="repeat" description="Nebulin 7" evidence="2">
    <location>
        <begin position="296"/>
        <end position="321"/>
    </location>
</feature>
<feature type="repeat" description="Nebulin 8" evidence="2">
    <location>
        <begin position="323"/>
        <end position="357"/>
    </location>
</feature>
<feature type="repeat" description="Nebulin 9" evidence="2">
    <location>
        <begin position="362"/>
        <end position="396"/>
    </location>
</feature>
<feature type="repeat" description="Nebulin 10" evidence="2">
    <location>
        <begin position="403"/>
        <end position="431"/>
    </location>
</feature>
<feature type="repeat" description="Nebulin 11" evidence="2">
    <location>
        <begin position="433"/>
        <end position="467"/>
    </location>
</feature>
<feature type="repeat" description="Nebulin 12" evidence="2">
    <location>
        <begin position="501"/>
        <end position="535"/>
    </location>
</feature>
<feature type="repeat" description="Nebulin 13" evidence="2">
    <location>
        <begin position="536"/>
        <end position="570"/>
    </location>
</feature>
<feature type="repeat" description="Nebulin 14" evidence="2">
    <location>
        <begin position="572"/>
        <end position="606"/>
    </location>
</feature>
<feature type="repeat" description="Nebulin 15" evidence="2">
    <location>
        <begin position="610"/>
        <end position="644"/>
    </location>
</feature>
<feature type="repeat" description="Nebulin 16" evidence="2">
    <location>
        <begin position="680"/>
        <end position="714"/>
    </location>
</feature>
<feature type="repeat" description="Nebulin 17" evidence="2">
    <location>
        <begin position="748"/>
        <end position="782"/>
    </location>
</feature>
<feature type="repeat" description="Nebulin 18" evidence="2">
    <location>
        <begin position="783"/>
        <end position="817"/>
    </location>
</feature>
<feature type="repeat" description="Nebulin 19" evidence="2">
    <location>
        <begin position="819"/>
        <end position="853"/>
    </location>
</feature>
<feature type="repeat" description="Nebulin 20" evidence="2">
    <location>
        <begin position="857"/>
        <end position="891"/>
    </location>
</feature>
<feature type="repeat" description="Nebulin 21" evidence="2">
    <location>
        <begin position="892"/>
        <end position="918"/>
    </location>
</feature>
<feature type="repeat" description="Nebulin 22" evidence="2">
    <location>
        <begin position="923"/>
        <end position="957"/>
    </location>
</feature>
<feature type="repeat" description="Nebulin 23" evidence="2">
    <location>
        <begin position="968"/>
        <end position="986"/>
    </location>
</feature>
<feature type="repeat" description="Nebulin 24" evidence="2">
    <location>
        <begin position="992"/>
        <end position="1026"/>
    </location>
</feature>
<feature type="repeat" description="Nebulin 25" evidence="2">
    <location>
        <begin position="1027"/>
        <end position="1061"/>
    </location>
</feature>
<feature type="repeat" description="Nebulin 26" evidence="2">
    <location>
        <begin position="1063"/>
        <end position="1097"/>
    </location>
</feature>
<feature type="repeat" description="Nebulin 27" evidence="2">
    <location>
        <begin position="1101"/>
        <end position="1135"/>
    </location>
</feature>
<feature type="repeat" description="Nebulin 28" evidence="2">
    <location>
        <begin position="1136"/>
        <end position="1166"/>
    </location>
</feature>
<feature type="repeat" description="Nebulin 29" evidence="2">
    <location>
        <begin position="1167"/>
        <end position="1201"/>
    </location>
</feature>
<feature type="repeat" description="Nebulin 30" evidence="2">
    <location>
        <begin position="1212"/>
        <end position="1230"/>
    </location>
</feature>
<feature type="repeat" description="Nebulin 31" evidence="2">
    <location>
        <begin position="1236"/>
        <end position="1270"/>
    </location>
</feature>
<feature type="repeat" description="Nebulin 32" evidence="2">
    <location>
        <begin position="1271"/>
        <end position="1305"/>
    </location>
</feature>
<feature type="repeat" description="Nebulin 33" evidence="2">
    <location>
        <begin position="1307"/>
        <end position="1341"/>
    </location>
</feature>
<feature type="repeat" description="Nebulin 34" evidence="2">
    <location>
        <begin position="1345"/>
        <end position="1379"/>
    </location>
</feature>
<feature type="repeat" description="Nebulin 35" evidence="2">
    <location>
        <begin position="1380"/>
        <end position="1407"/>
    </location>
</feature>
<feature type="repeat" description="Nebulin 36" evidence="2">
    <location>
        <begin position="1411"/>
        <end position="1445"/>
    </location>
</feature>
<feature type="repeat" description="Nebulin 37" evidence="2">
    <location>
        <begin position="1456"/>
        <end position="1474"/>
    </location>
</feature>
<feature type="repeat" description="Nebulin 38" evidence="2">
    <location>
        <begin position="1480"/>
        <end position="1514"/>
    </location>
</feature>
<feature type="repeat" description="Nebulin 39" evidence="2">
    <location>
        <begin position="1515"/>
        <end position="1549"/>
    </location>
</feature>
<feature type="repeat" description="Nebulin 40" evidence="2">
    <location>
        <begin position="1551"/>
        <end position="1585"/>
    </location>
</feature>
<feature type="repeat" description="Nebulin 41" evidence="2">
    <location>
        <begin position="1589"/>
        <end position="1623"/>
    </location>
</feature>
<feature type="repeat" description="Nebulin 42" evidence="2">
    <location>
        <begin position="1624"/>
        <end position="1654"/>
    </location>
</feature>
<feature type="repeat" description="Nebulin 43" evidence="2">
    <location>
        <begin position="1655"/>
        <end position="1689"/>
    </location>
</feature>
<feature type="repeat" description="Nebulin 44" evidence="2">
    <location>
        <begin position="1697"/>
        <end position="1725"/>
    </location>
</feature>
<feature type="repeat" description="Nebulin 45" evidence="2">
    <location>
        <begin position="1730"/>
        <end position="1758"/>
    </location>
</feature>
<feature type="repeat" description="Nebulin 46" evidence="2">
    <location>
        <begin position="1759"/>
        <end position="1793"/>
    </location>
</feature>
<feature type="repeat" description="Nebulin 47" evidence="2">
    <location>
        <begin position="1795"/>
        <end position="1829"/>
    </location>
</feature>
<feature type="repeat" description="Nebulin 48" evidence="2">
    <location>
        <begin position="1833"/>
        <end position="1867"/>
    </location>
</feature>
<feature type="repeat" description="Nebulin 49" evidence="2">
    <location>
        <begin position="1868"/>
        <end position="1894"/>
    </location>
</feature>
<feature type="repeat" description="Nebulin 50" evidence="2">
    <location>
        <begin position="1899"/>
        <end position="1933"/>
    </location>
</feature>
<feature type="repeat" description="Nebulin 51" evidence="2">
    <location>
        <begin position="1949"/>
        <end position="1962"/>
    </location>
</feature>
<feature type="repeat" description="Nebulin 52" evidence="2">
    <location>
        <begin position="1968"/>
        <end position="2002"/>
    </location>
</feature>
<feature type="repeat" description="Nebulin 53" evidence="2">
    <location>
        <begin position="2003"/>
        <end position="2037"/>
    </location>
</feature>
<feature type="repeat" description="Nebulin 54" evidence="2">
    <location>
        <begin position="2039"/>
        <end position="2073"/>
    </location>
</feature>
<feature type="repeat" description="Nebulin 55" evidence="2">
    <location>
        <begin position="2077"/>
        <end position="2111"/>
    </location>
</feature>
<feature type="repeat" description="Nebulin 56" evidence="2">
    <location>
        <begin position="2112"/>
        <end position="2138"/>
    </location>
</feature>
<feature type="repeat" description="Nebulin 57" evidence="2">
    <location>
        <begin position="2143"/>
        <end position="2177"/>
    </location>
</feature>
<feature type="repeat" description="Nebulin 58" evidence="2">
    <location>
        <begin position="2188"/>
        <end position="2206"/>
    </location>
</feature>
<feature type="repeat" description="Nebulin 59" evidence="2">
    <location>
        <begin position="2212"/>
        <end position="2246"/>
    </location>
</feature>
<feature type="repeat" description="Nebulin 60" evidence="2">
    <location>
        <begin position="2247"/>
        <end position="2281"/>
    </location>
</feature>
<feature type="repeat" description="Nebulin 61" evidence="2">
    <location>
        <begin position="2283"/>
        <end position="2317"/>
    </location>
</feature>
<feature type="repeat" description="Nebulin 62" evidence="2">
    <location>
        <begin position="2321"/>
        <end position="2355"/>
    </location>
</feature>
<feature type="repeat" description="Nebulin 63" evidence="2">
    <location>
        <begin position="2356"/>
        <end position="2382"/>
    </location>
</feature>
<feature type="repeat" description="Nebulin 64" evidence="2">
    <location>
        <begin position="2387"/>
        <end position="2421"/>
    </location>
</feature>
<feature type="repeat" description="Nebulin 65" evidence="2">
    <location>
        <begin position="2436"/>
        <end position="2449"/>
    </location>
</feature>
<feature type="repeat" description="Nebulin 66" evidence="2">
    <location>
        <begin position="2455"/>
        <end position="2489"/>
    </location>
</feature>
<feature type="repeat" description="Nebulin 67" evidence="2">
    <location>
        <begin position="2490"/>
        <end position="2524"/>
    </location>
</feature>
<feature type="repeat" description="Nebulin 68" evidence="2">
    <location>
        <begin position="2526"/>
        <end position="2560"/>
    </location>
</feature>
<feature type="repeat" description="Nebulin 69" evidence="2">
    <location>
        <begin position="2564"/>
        <end position="2598"/>
    </location>
</feature>
<feature type="repeat" description="Nebulin 70" evidence="2">
    <location>
        <begin position="2599"/>
        <end position="2625"/>
    </location>
</feature>
<feature type="repeat" description="Nebulin 71" evidence="2">
    <location>
        <begin position="2630"/>
        <end position="2664"/>
    </location>
</feature>
<feature type="repeat" description="Nebulin 72" evidence="2">
    <location>
        <begin position="2679"/>
        <end position="2692"/>
    </location>
</feature>
<feature type="repeat" description="Nebulin 73" evidence="2">
    <location>
        <begin position="2698"/>
        <end position="2732"/>
    </location>
</feature>
<feature type="repeat" description="Nebulin 74" evidence="2">
    <location>
        <begin position="2733"/>
        <end position="2767"/>
    </location>
</feature>
<feature type="repeat" description="Nebulin 75" evidence="2">
    <location>
        <begin position="2769"/>
        <end position="2803"/>
    </location>
</feature>
<feature type="repeat" description="Nebulin 76" evidence="2">
    <location>
        <begin position="2807"/>
        <end position="2841"/>
    </location>
</feature>
<feature type="repeat" description="Nebulin 77" evidence="2">
    <location>
        <begin position="2842"/>
        <end position="2868"/>
    </location>
</feature>
<feature type="repeat" description="Nebulin 78" evidence="2">
    <location>
        <begin position="2873"/>
        <end position="2907"/>
    </location>
</feature>
<feature type="repeat" description="Nebulin 79" evidence="2">
    <location>
        <begin position="2917"/>
        <end position="2935"/>
    </location>
</feature>
<feature type="repeat" description="Nebulin 80" evidence="2">
    <location>
        <begin position="2941"/>
        <end position="2975"/>
    </location>
</feature>
<feature type="repeat" description="Nebulin 81" evidence="2">
    <location>
        <begin position="2976"/>
        <end position="3010"/>
    </location>
</feature>
<feature type="repeat" description="Nebulin 82" evidence="2">
    <location>
        <begin position="3012"/>
        <end position="3046"/>
    </location>
</feature>
<feature type="repeat" description="Nebulin 83" evidence="2">
    <location>
        <begin position="3050"/>
        <end position="3084"/>
    </location>
</feature>
<feature type="repeat" description="Nebulin 84" evidence="2">
    <location>
        <begin position="3085"/>
        <end position="3111"/>
    </location>
</feature>
<feature type="repeat" description="Nebulin 85" evidence="2">
    <location>
        <begin position="3116"/>
        <end position="3150"/>
    </location>
</feature>
<feature type="repeat" description="Nebulin 86" evidence="2">
    <location>
        <begin position="3158"/>
        <end position="3178"/>
    </location>
</feature>
<feature type="repeat" description="Nebulin 87" evidence="2">
    <location>
        <begin position="3184"/>
        <end position="3218"/>
    </location>
</feature>
<feature type="repeat" description="Nebulin 88" evidence="2">
    <location>
        <begin position="3219"/>
        <end position="3253"/>
    </location>
</feature>
<feature type="repeat" description="Nebulin 89" evidence="2">
    <location>
        <begin position="3255"/>
        <end position="3289"/>
    </location>
</feature>
<feature type="repeat" description="Nebulin 90" evidence="2">
    <location>
        <begin position="3293"/>
        <end position="3327"/>
    </location>
</feature>
<feature type="repeat" description="Nebulin 91" evidence="2">
    <location>
        <begin position="3328"/>
        <end position="3354"/>
    </location>
</feature>
<feature type="repeat" description="Nebulin 92" evidence="2">
    <location>
        <begin position="3359"/>
        <end position="3393"/>
    </location>
</feature>
<feature type="repeat" description="Nebulin 93" evidence="2">
    <location>
        <begin position="3401"/>
        <end position="3421"/>
    </location>
</feature>
<feature type="repeat" description="Nebulin 94" evidence="2">
    <location>
        <begin position="3427"/>
        <end position="3461"/>
    </location>
</feature>
<feature type="repeat" description="Nebulin 95" evidence="2">
    <location>
        <begin position="3462"/>
        <end position="3496"/>
    </location>
</feature>
<feature type="repeat" description="Nebulin 96" evidence="2">
    <location>
        <begin position="3498"/>
        <end position="3532"/>
    </location>
</feature>
<feature type="repeat" description="Nebulin 97" evidence="2">
    <location>
        <begin position="3536"/>
        <end position="3570"/>
    </location>
</feature>
<feature type="repeat" description="Nebulin 98" evidence="2">
    <location>
        <begin position="3571"/>
        <end position="3597"/>
    </location>
</feature>
<feature type="repeat" description="Nebulin 99" evidence="2">
    <location>
        <begin position="3602"/>
        <end position="3636"/>
    </location>
</feature>
<feature type="repeat" description="Nebulin 100" evidence="2">
    <location>
        <begin position="3643"/>
        <end position="3664"/>
    </location>
</feature>
<feature type="repeat" description="Nebulin 101" evidence="2">
    <location>
        <begin position="3670"/>
        <end position="3704"/>
    </location>
</feature>
<feature type="repeat" description="Nebulin 102" evidence="2">
    <location>
        <begin position="3705"/>
        <end position="3739"/>
    </location>
</feature>
<feature type="repeat" description="Nebulin 103" evidence="2">
    <location>
        <begin position="3741"/>
        <end position="3775"/>
    </location>
</feature>
<feature type="repeat" description="Nebulin 104" evidence="2">
    <location>
        <begin position="3779"/>
        <end position="3813"/>
    </location>
</feature>
<feature type="repeat" description="Nebulin 105" evidence="2">
    <location>
        <begin position="3814"/>
        <end position="3840"/>
    </location>
</feature>
<feature type="repeat" description="Nebulin 106" evidence="2">
    <location>
        <begin position="3845"/>
        <end position="3879"/>
    </location>
</feature>
<feature type="repeat" description="Nebulin 107" evidence="2">
    <location>
        <begin position="3889"/>
        <end position="3907"/>
    </location>
</feature>
<feature type="repeat" description="Nebulin 108" evidence="2">
    <location>
        <begin position="3913"/>
        <end position="3947"/>
    </location>
</feature>
<feature type="repeat" description="Nebulin 109" evidence="2">
    <location>
        <begin position="3948"/>
        <end position="3982"/>
    </location>
</feature>
<feature type="repeat" description="Nebulin 110" evidence="2">
    <location>
        <begin position="3984"/>
        <end position="4018"/>
    </location>
</feature>
<feature type="repeat" description="Nebulin 111" evidence="2">
    <location>
        <begin position="4022"/>
        <end position="4056"/>
    </location>
</feature>
<feature type="repeat" description="Nebulin 112" evidence="2">
    <location>
        <begin position="4057"/>
        <end position="4083"/>
    </location>
</feature>
<feature type="repeat" description="Nebulin 113" evidence="2">
    <location>
        <begin position="4088"/>
        <end position="4122"/>
    </location>
</feature>
<feature type="repeat" description="Nebulin 114" evidence="2">
    <location>
        <begin position="4132"/>
        <end position="4149"/>
    </location>
</feature>
<feature type="repeat" description="Nebulin 115" evidence="2">
    <location>
        <begin position="4156"/>
        <end position="4190"/>
    </location>
</feature>
<feature type="repeat" description="Nebulin 116" evidence="2">
    <location>
        <begin position="4191"/>
        <end position="4225"/>
    </location>
</feature>
<feature type="repeat" description="Nebulin 117" evidence="2">
    <location>
        <begin position="4227"/>
        <end position="4261"/>
    </location>
</feature>
<feature type="repeat" description="Nebulin 118" evidence="2">
    <location>
        <begin position="4265"/>
        <end position="4299"/>
    </location>
</feature>
<feature type="repeat" description="Nebulin 119" evidence="2">
    <location>
        <begin position="4300"/>
        <end position="4326"/>
    </location>
</feature>
<feature type="repeat" description="Nebulin 120" evidence="2">
    <location>
        <begin position="4331"/>
        <end position="4365"/>
    </location>
</feature>
<feature type="repeat" description="Nebulin 121" evidence="2">
    <location>
        <begin position="4375"/>
        <end position="4392"/>
    </location>
</feature>
<feature type="repeat" description="Nebulin 122" evidence="2">
    <location>
        <begin position="4399"/>
        <end position="4433"/>
    </location>
</feature>
<feature type="repeat" description="Nebulin 123" evidence="2">
    <location>
        <begin position="4434"/>
        <end position="4468"/>
    </location>
</feature>
<feature type="repeat" description="Nebulin 124" evidence="2">
    <location>
        <begin position="4470"/>
        <end position="4504"/>
    </location>
</feature>
<feature type="repeat" description="Nebulin 125" evidence="2">
    <location>
        <begin position="4508"/>
        <end position="4542"/>
    </location>
</feature>
<feature type="repeat" description="Nebulin 126" evidence="2">
    <location>
        <begin position="4543"/>
        <end position="4569"/>
    </location>
</feature>
<feature type="repeat" description="Nebulin 127" evidence="2">
    <location>
        <begin position="4574"/>
        <end position="4608"/>
    </location>
</feature>
<feature type="repeat" description="Nebulin 128" evidence="2">
    <location>
        <begin position="4618"/>
        <end position="4635"/>
    </location>
</feature>
<feature type="repeat" description="Nebulin 129" evidence="2">
    <location>
        <begin position="4642"/>
        <end position="4676"/>
    </location>
</feature>
<feature type="repeat" description="Nebulin 130" evidence="2">
    <location>
        <begin position="4677"/>
        <end position="4711"/>
    </location>
</feature>
<feature type="repeat" description="Nebulin 131" evidence="2">
    <location>
        <begin position="4713"/>
        <end position="4747"/>
    </location>
</feature>
<feature type="repeat" description="Nebulin 132" evidence="2">
    <location>
        <begin position="4751"/>
        <end position="4785"/>
    </location>
</feature>
<feature type="repeat" description="Nebulin 133" evidence="2">
    <location>
        <begin position="4786"/>
        <end position="4812"/>
    </location>
</feature>
<feature type="repeat" description="Nebulin 134" evidence="2">
    <location>
        <begin position="4817"/>
        <end position="4851"/>
    </location>
</feature>
<feature type="repeat" description="Nebulin 135" evidence="2">
    <location>
        <begin position="4861"/>
        <end position="4878"/>
    </location>
</feature>
<feature type="repeat" description="Nebulin 136" evidence="2">
    <location>
        <begin position="4885"/>
        <end position="4919"/>
    </location>
</feature>
<feature type="repeat" description="Nebulin 137" evidence="2">
    <location>
        <begin position="4920"/>
        <end position="4954"/>
    </location>
</feature>
<feature type="repeat" description="Nebulin 138" evidence="2">
    <location>
        <begin position="4956"/>
        <end position="4990"/>
    </location>
</feature>
<feature type="repeat" description="Nebulin 139" evidence="2">
    <location>
        <begin position="4994"/>
        <end position="5028"/>
    </location>
</feature>
<feature type="repeat" description="Nebulin 140" evidence="2">
    <location>
        <begin position="5029"/>
        <end position="5055"/>
    </location>
</feature>
<feature type="repeat" description="Nebulin 141" evidence="2">
    <location>
        <begin position="5060"/>
        <end position="5094"/>
    </location>
</feature>
<feature type="repeat" description="Nebulin 142" evidence="2">
    <location>
        <begin position="5104"/>
        <end position="5121"/>
    </location>
</feature>
<feature type="repeat" description="Nebulin 143" evidence="2">
    <location>
        <begin position="5128"/>
        <end position="5162"/>
    </location>
</feature>
<feature type="repeat" description="Nebulin 144" evidence="2">
    <location>
        <begin position="5163"/>
        <end position="5197"/>
    </location>
</feature>
<feature type="repeat" description="Nebulin 145" evidence="2">
    <location>
        <begin position="5199"/>
        <end position="5233"/>
    </location>
</feature>
<feature type="repeat" description="Nebulin 146" evidence="2">
    <location>
        <begin position="5237"/>
        <end position="5271"/>
    </location>
</feature>
<feature type="repeat" description="Nebulin 147" evidence="2">
    <location>
        <begin position="5272"/>
        <end position="5298"/>
    </location>
</feature>
<feature type="repeat" description="Nebulin 148" evidence="2">
    <location>
        <begin position="5303"/>
        <end position="5337"/>
    </location>
</feature>
<feature type="repeat" description="Nebulin 149" evidence="2">
    <location>
        <begin position="5347"/>
        <end position="5364"/>
    </location>
</feature>
<feature type="repeat" description="Nebulin 150" evidence="2">
    <location>
        <begin position="5371"/>
        <end position="5405"/>
    </location>
</feature>
<feature type="repeat" description="Nebulin 151" evidence="2">
    <location>
        <begin position="5406"/>
        <end position="5440"/>
    </location>
</feature>
<feature type="repeat" description="Nebulin 152" evidence="2">
    <location>
        <begin position="5442"/>
        <end position="5476"/>
    </location>
</feature>
<feature type="repeat" description="Nebulin 153" evidence="2">
    <location>
        <begin position="5480"/>
        <end position="5514"/>
    </location>
</feature>
<feature type="repeat" description="Nebulin 154" evidence="2">
    <location>
        <begin position="5515"/>
        <end position="5541"/>
    </location>
</feature>
<feature type="repeat" description="Nebulin 155" evidence="2">
    <location>
        <begin position="5546"/>
        <end position="5580"/>
    </location>
</feature>
<feature type="repeat" description="Nebulin 156" evidence="2">
    <location>
        <begin position="5588"/>
        <end position="5607"/>
    </location>
</feature>
<feature type="repeat" description="Nebulin 157" evidence="2">
    <location>
        <begin position="5614"/>
        <end position="5648"/>
    </location>
</feature>
<feature type="repeat" description="Nebulin 158" evidence="2">
    <location>
        <begin position="5649"/>
        <end position="5683"/>
    </location>
</feature>
<feature type="repeat" description="Nebulin 159" evidence="2">
    <location>
        <begin position="5690"/>
        <end position="5718"/>
    </location>
</feature>
<feature type="repeat" description="Nebulin 160" evidence="2">
    <location>
        <begin position="5722"/>
        <end position="5756"/>
    </location>
</feature>
<feature type="repeat" description="Nebulin 161" evidence="2">
    <location>
        <begin position="5757"/>
        <end position="5783"/>
    </location>
</feature>
<feature type="repeat" description="Nebulin 162" evidence="2">
    <location>
        <begin position="5788"/>
        <end position="5822"/>
    </location>
</feature>
<feature type="repeat" description="Nebulin 163" evidence="2">
    <location>
        <begin position="5829"/>
        <end position="5853"/>
    </location>
</feature>
<feature type="repeat" description="Nebulin 164" evidence="2">
    <location>
        <begin position="5856"/>
        <end position="5890"/>
    </location>
</feature>
<feature type="repeat" description="Nebulin 165" evidence="2">
    <location>
        <begin position="5893"/>
        <end position="5924"/>
    </location>
</feature>
<feature type="repeat" description="Nebulin 166" evidence="2">
    <location>
        <begin position="5926"/>
        <end position="5960"/>
    </location>
</feature>
<feature type="repeat" description="Nebulin 167" evidence="2">
    <location>
        <begin position="5964"/>
        <end position="5998"/>
    </location>
</feature>
<feature type="repeat" description="Nebulin 168" evidence="2">
    <location>
        <begin position="5999"/>
        <end position="6025"/>
    </location>
</feature>
<feature type="repeat" description="Nebulin 169" evidence="2">
    <location>
        <begin position="6030"/>
        <end position="6064"/>
    </location>
</feature>
<feature type="repeat" description="Nebulin 170" evidence="2">
    <location>
        <begin position="6071"/>
        <end position="6099"/>
    </location>
</feature>
<feature type="repeat" description="Nebulin 171" evidence="2">
    <location>
        <begin position="6100"/>
        <end position="6134"/>
    </location>
</feature>
<feature type="repeat" description="Nebulin 172" evidence="2">
    <location>
        <begin position="6135"/>
        <end position="6169"/>
    </location>
</feature>
<feature type="repeat" description="Nebulin 173" evidence="2">
    <location>
        <begin position="6171"/>
        <end position="6205"/>
    </location>
</feature>
<feature type="repeat" description="Nebulin 174" evidence="2">
    <location>
        <begin position="6209"/>
        <end position="6243"/>
    </location>
</feature>
<feature type="repeat" description="Nebulin 175" evidence="2">
    <location>
        <begin position="6244"/>
        <end position="6274"/>
    </location>
</feature>
<feature type="repeat" description="Nebulin 176" evidence="2">
    <location>
        <begin position="6275"/>
        <end position="6309"/>
    </location>
</feature>
<feature type="repeat" description="Nebulin 177" evidence="2">
    <location>
        <begin position="6316"/>
        <end position="6344"/>
    </location>
</feature>
<feature type="repeat" description="Nebulin 178" evidence="2">
    <location>
        <begin position="6345"/>
        <end position="6379"/>
    </location>
</feature>
<feature type="repeat" description="Nebulin 179" evidence="2">
    <location>
        <begin position="6380"/>
        <end position="6414"/>
    </location>
</feature>
<feature type="repeat" description="Nebulin 180" evidence="2">
    <location>
        <begin position="6416"/>
        <end position="6450"/>
    </location>
</feature>
<feature type="repeat" description="Nebulin 181" evidence="2">
    <location>
        <begin position="6458"/>
        <end position="6488"/>
    </location>
</feature>
<feature type="repeat" description="Nebulin 182" evidence="2">
    <location>
        <begin position="6489"/>
        <end position="6515"/>
    </location>
</feature>
<feature type="repeat" description="Nebulin 183" evidence="2">
    <location>
        <begin position="6532"/>
        <end position="6554"/>
    </location>
</feature>
<feature type="repeat" description="Nebulin 184" evidence="2">
    <location>
        <begin position="6561"/>
        <end position="6589"/>
    </location>
</feature>
<feature type="repeat" description="Nebulin 185" evidence="2">
    <location>
        <begin position="6590"/>
        <end position="6624"/>
    </location>
</feature>
<feature type="repeat" description="Nebulin 186" evidence="2">
    <location>
        <begin position="6626"/>
        <end position="6660"/>
    </location>
</feature>
<feature type="repeat" description="Nebulin 187" evidence="2">
    <location>
        <begin position="6661"/>
        <end position="6695"/>
    </location>
</feature>
<feature type="repeat" description="Nebulin 188" evidence="2">
    <location>
        <begin position="6697"/>
        <end position="6731"/>
    </location>
</feature>
<feature type="repeat" description="Nebulin 189" evidence="2">
    <location>
        <begin position="6732"/>
        <end position="6766"/>
    </location>
</feature>
<feature type="repeat" description="Nebulin 190" evidence="2">
    <location>
        <begin position="6767"/>
        <end position="6801"/>
    </location>
</feature>
<feature type="repeat" description="Nebulin 191" evidence="2">
    <location>
        <begin position="6808"/>
        <end position="6836"/>
    </location>
</feature>
<feature type="repeat" description="Nebulin 192" evidence="2">
    <location>
        <begin position="6837"/>
        <end position="6871"/>
    </location>
</feature>
<feature type="repeat" description="Nebulin 193" evidence="2">
    <location>
        <begin position="6872"/>
        <end position="6906"/>
    </location>
</feature>
<feature type="repeat" description="Nebulin 194" evidence="2">
    <location>
        <begin position="6907"/>
        <end position="6941"/>
    </location>
</feature>
<feature type="repeat" description="Nebulin 195" evidence="2">
    <location>
        <begin position="6942"/>
        <end position="6976"/>
    </location>
</feature>
<feature type="repeat" description="Nebulin 196" evidence="2">
    <location>
        <begin position="6977"/>
        <end position="7011"/>
    </location>
</feature>
<feature type="repeat" description="Nebulin 197" evidence="2">
    <location>
        <begin position="7012"/>
        <end position="7046"/>
    </location>
</feature>
<feature type="repeat" description="Nebulin 198" evidence="2">
    <location>
        <begin position="7053"/>
        <end position="7081"/>
    </location>
</feature>
<feature type="repeat" description="Nebulin 199" evidence="2">
    <location>
        <begin position="7082"/>
        <end position="7110"/>
    </location>
</feature>
<feature type="repeat" description="Nebulin 200" evidence="2">
    <location>
        <begin position="7125"/>
        <end position="7151"/>
    </location>
</feature>
<feature type="repeat" description="Nebulin 201" evidence="2">
    <location>
        <begin position="7152"/>
        <end position="7186"/>
    </location>
</feature>
<feature type="repeat" description="Nebulin 202" evidence="2">
    <location>
        <begin position="7188"/>
        <end position="7222"/>
    </location>
</feature>
<feature type="repeat" description="Nebulin 203" evidence="2">
    <location>
        <begin position="7223"/>
        <end position="7257"/>
    </location>
</feature>
<feature type="repeat" description="Nebulin 204" evidence="2">
    <location>
        <begin position="7258"/>
        <end position="7292"/>
    </location>
</feature>
<feature type="repeat" description="Nebulin 205" evidence="2">
    <location>
        <begin position="7297"/>
        <end position="7327"/>
    </location>
</feature>
<feature type="repeat" description="Nebulin 206" evidence="2">
    <location>
        <begin position="7328"/>
        <end position="7362"/>
    </location>
</feature>
<feature type="repeat" description="Nebulin 207" evidence="2">
    <location>
        <begin position="7365"/>
        <end position="7399"/>
    </location>
</feature>
<feature type="repeat" description="Nebulin 208" evidence="2">
    <location>
        <begin position="7402"/>
        <end position="7433"/>
    </location>
</feature>
<feature type="repeat" description="Nebulin 209" evidence="2">
    <location>
        <begin position="7436"/>
        <end position="7470"/>
    </location>
</feature>
<feature type="repeat" description="Nebulin 210" evidence="2">
    <location>
        <begin position="7479"/>
        <end position="7505"/>
    </location>
</feature>
<feature type="repeat" description="Nebulin 211" evidence="2">
    <location>
        <begin position="7514"/>
        <end position="7542"/>
    </location>
</feature>
<feature type="repeat" description="Nebulin 212" evidence="2">
    <location>
        <begin position="7543"/>
        <end position="7577"/>
    </location>
</feature>
<feature type="repeat" description="Nebulin 213" evidence="2">
    <location>
        <begin position="7578"/>
        <end position="7612"/>
    </location>
</feature>
<feature type="repeat" description="Nebulin 214" evidence="2">
    <location>
        <begin position="7619"/>
        <end position="7647"/>
    </location>
</feature>
<feature type="repeat" description="Nebulin 215" evidence="2">
    <location>
        <begin position="7650"/>
        <end position="7684"/>
    </location>
</feature>
<feature type="repeat" description="Nebulin 216" evidence="2">
    <location>
        <begin position="7687"/>
        <end position="7721"/>
    </location>
</feature>
<feature type="repeat" description="Nebulin 217" evidence="2">
    <location>
        <begin position="7731"/>
        <end position="7759"/>
    </location>
</feature>
<feature type="repeat" description="Nebulin 218" evidence="2">
    <location>
        <begin position="7760"/>
        <end position="7794"/>
    </location>
</feature>
<feature type="repeat" description="Nebulin 219" evidence="2">
    <location>
        <begin position="7795"/>
        <end position="7829"/>
    </location>
</feature>
<feature type="repeat" description="Nebulin 220" evidence="2">
    <location>
        <begin position="7830"/>
        <end position="7864"/>
    </location>
</feature>
<feature type="repeat" description="Nebulin 221" evidence="2">
    <location>
        <begin position="7867"/>
        <end position="7888"/>
    </location>
</feature>
<feature type="repeat" description="Nebulin 222" evidence="2">
    <location>
        <begin position="7892"/>
        <end position="7921"/>
    </location>
</feature>
<feature type="repeat" description="Nebulin 223" evidence="2">
    <location>
        <begin position="7930"/>
        <end position="7957"/>
    </location>
</feature>
<feature type="repeat" description="Nebulin 224" evidence="2">
    <location>
        <begin position="7961"/>
        <end position="7988"/>
    </location>
</feature>
<feature type="repeat" description="Nebulin 225" evidence="2">
    <location>
        <begin position="7992"/>
        <end position="8013"/>
    </location>
</feature>
<feature type="repeat" description="Nebulin 226" evidence="2">
    <location>
        <begin position="8016"/>
        <end position="8045"/>
    </location>
</feature>
<feature type="repeat" description="Nebulin 227" evidence="2">
    <location>
        <begin position="8054"/>
        <end position="8075"/>
    </location>
</feature>
<feature type="repeat" description="Nebulin 228" evidence="2">
    <location>
        <begin position="8078"/>
        <end position="8112"/>
    </location>
</feature>
<feature type="repeat" description="Nebulin 229" evidence="2">
    <location>
        <begin position="8116"/>
        <end position="8143"/>
    </location>
</feature>
<feature type="repeat" description="Nebulin 230" evidence="2">
    <location>
        <begin position="8147"/>
        <end position="8168"/>
    </location>
</feature>
<feature type="repeat" description="Nebulin 231" evidence="2">
    <location>
        <begin position="8171"/>
        <end position="8205"/>
    </location>
</feature>
<feature type="repeat" description="Nebulin 232" evidence="2">
    <location>
        <begin position="8209"/>
        <end position="8232"/>
    </location>
</feature>
<feature type="repeat" description="Nebulin 233" evidence="2">
    <location>
        <begin position="8233"/>
        <end position="8267"/>
    </location>
</feature>
<feature type="repeat" description="Nebulin 234" evidence="2">
    <location>
        <begin position="8269"/>
        <end position="8303"/>
    </location>
</feature>
<feature type="repeat" description="Nebulin 235" evidence="2">
    <location>
        <begin position="8304"/>
        <end position="8330"/>
    </location>
</feature>
<feature type="domain" description="SH3" evidence="1">
    <location>
        <begin position="8466"/>
        <end position="8525"/>
    </location>
</feature>
<feature type="region of interest" description="Disordered" evidence="3">
    <location>
        <begin position="34"/>
        <end position="70"/>
    </location>
</feature>
<feature type="region of interest" description="Interaction with SVIL" evidence="6">
    <location>
        <begin position="8313"/>
        <end position="8468"/>
    </location>
</feature>
<feature type="region of interest" description="Disordered" evidence="3">
    <location>
        <begin position="8385"/>
        <end position="8422"/>
    </location>
</feature>
<feature type="region of interest" description="Disordered" evidence="3">
    <location>
        <begin position="8439"/>
        <end position="8463"/>
    </location>
</feature>
<feature type="compositionally biased region" description="Low complexity" evidence="3">
    <location>
        <begin position="48"/>
        <end position="64"/>
    </location>
</feature>
<feature type="compositionally biased region" description="Basic and acidic residues" evidence="3">
    <location>
        <begin position="8405"/>
        <end position="8419"/>
    </location>
</feature>
<feature type="compositionally biased region" description="Low complexity" evidence="3">
    <location>
        <begin position="8444"/>
        <end position="8459"/>
    </location>
</feature>
<feature type="splice variant" id="VSP_062336" description="In isoform 4.">
    <location>
        <begin position="2941"/>
        <end position="3183"/>
    </location>
</feature>
<feature type="splice variant" id="VSP_062337" description="In isoform 1.">
    <location>
        <begin position="2961"/>
        <end position="3203"/>
    </location>
</feature>
<feature type="splice variant" id="VSP_062338" description="In isoform 1 and isoform 4.">
    <location>
        <begin position="4103"/>
        <end position="5560"/>
    </location>
</feature>
<feature type="splice variant" id="VSP_062339" description="In isoform 1, isoform 3 and isoform 4.">
    <original>RKYKSSAKMFLQHGCNEILRPDMLTALYNSHMW</original>
    <variation>KKYRADYEQRKDKYHLVVDEPRHLLAKTAGDQI</variation>
    <location>
        <begin position="7105"/>
        <end position="7137"/>
    </location>
</feature>
<feature type="splice variant" id="VSP_062340" description="In isoform 1 and isoform 4.">
    <location>
        <begin position="7975"/>
        <end position="8129"/>
    </location>
</feature>
<feature type="sequence variant" id="VAR_047692" description="In dbSNP:rs4077109.">
    <original>T</original>
    <variation>A</variation>
    <location>
        <position position="146"/>
    </location>
</feature>
<feature type="sequence variant" id="VAR_047693" description="In dbSNP:rs35686968.">
    <original>E</original>
    <variation>Q</variation>
    <location>
        <position position="191"/>
    </location>
</feature>
<feature type="sequence variant" id="VAR_085714" description="In AMC6." evidence="10">
    <location>
        <begin position="974"/>
        <end position="8525"/>
    </location>
</feature>
<feature type="sequence variant" id="VAR_047694" description="In dbSNP:rs6735208." evidence="12">
    <original>K</original>
    <variation>N</variation>
    <location>
        <position position="1027"/>
    </location>
</feature>
<feature type="sequence variant" id="VAR_047695" description="In dbSNP:rs6711382." evidence="12">
    <original>Y</original>
    <variation>H</variation>
    <location>
        <position position="1301"/>
    </location>
</feature>
<feature type="sequence variant" id="VAR_047696" description="In dbSNP:rs34800215.">
    <original>E</original>
    <variation>D</variation>
    <location>
        <position position="1469"/>
    </location>
</feature>
<feature type="sequence variant" id="VAR_047697" description="In dbSNP:rs34577613.">
    <original>V</original>
    <variation>I</variation>
    <location>
        <position position="1479"/>
    </location>
</feature>
<feature type="sequence variant" id="VAR_047698" description="In dbSNP:rs7426114." evidence="12">
    <original>V</original>
    <variation>M</variation>
    <location>
        <position position="1491"/>
    </location>
</feature>
<feature type="sequence variant" id="VAR_047699" description="In dbSNP:rs34532796.">
    <original>Y</original>
    <variation>H</variation>
    <location>
        <position position="1969"/>
    </location>
</feature>
<feature type="sequence variant" id="VAR_047700" description="In dbSNP:rs13013209.">
    <original>K</original>
    <variation>N</variation>
    <location>
        <position position="2613"/>
    </location>
</feature>
<feature type="sequence variant" id="VAR_047701" description="In dbSNP:rs35974308.">
    <original>R</original>
    <variation>Q</variation>
    <location>
        <position position="2773"/>
    </location>
</feature>
<feature type="sequence variant" id="VAR_047702" description="In dbSNP:rs6713162.">
    <original>S</original>
    <variation>P</variation>
    <location>
        <position position="2912"/>
    </location>
</feature>
<feature type="sequence variant" id="VAR_047703" description="In dbSNP:rs13024542.">
    <original>V</original>
    <variation>G</variation>
    <location>
        <position position="2952"/>
    </location>
</feature>
<feature type="sequence variant" id="VAR_047704" description="In dbSNP:rs10172023." evidence="12">
    <original>W</original>
    <variation>C</variation>
    <location>
        <position position="3603"/>
    </location>
</feature>
<feature type="sequence variant" id="VAR_047705" description="In dbSNP:rs35227368.">
    <original>S</original>
    <variation>T</variation>
    <location>
        <position position="5588"/>
    </location>
</feature>
<feature type="sequence variant" id="VAR_047706" description="In dbSNP:rs4327235.">
    <original>P</original>
    <variation>L</variation>
    <location>
        <position position="5972"/>
    </location>
</feature>
<feature type="sequence variant" id="VAR_047707" description="In dbSNP:rs16830236.">
    <original>N</original>
    <variation>S</variation>
    <location>
        <position position="6038"/>
    </location>
</feature>
<feature type="sequence variant" id="VAR_047708" description="In dbSNP:rs2288210." evidence="12">
    <original>R</original>
    <variation>T</variation>
    <location>
        <position position="6102"/>
    </location>
</feature>
<feature type="sequence variant" id="VAR_085715" description="In AMC6." evidence="11">
    <location>
        <begin position="6262"/>
        <end position="8525"/>
    </location>
</feature>
<feature type="sequence variant" id="VAR_085716" description="In AMC6." evidence="11">
    <location>
        <begin position="6327"/>
        <end position="8525"/>
    </location>
</feature>
<feature type="sequence variant" id="VAR_024240" description="In dbSNP:rs2288200.">
    <original>D</original>
    <variation>V</variation>
    <location>
        <position position="6731"/>
    </location>
</feature>
<feature type="sequence variant" id="VAR_047709" description="In dbSNP:rs16830171.">
    <original>R</original>
    <variation>P</variation>
    <location>
        <position position="7164"/>
    </location>
</feature>
<feature type="sequence variant" id="VAR_021888" description="In dbSNP:rs3732309.">
    <original>G</original>
    <variation>E</variation>
    <location>
        <position position="7635"/>
    </location>
</feature>
<feature type="sequence variant" id="VAR_056953" description="In dbSNP:rs34368668.">
    <original>T</original>
    <variation>I</variation>
    <location>
        <position position="7832"/>
    </location>
</feature>
<feature type="sequence variant" id="VAR_056954" description="In dbSNP:rs1061305." evidence="12">
    <original>I</original>
    <variation>V</variation>
    <location>
        <position position="8402"/>
    </location>
</feature>
<feature type="sequence conflict" description="In Ref. 1; CAA58788." evidence="14" ref="1">
    <original>E</original>
    <variation>D</variation>
    <location>
        <position position="727"/>
    </location>
</feature>
<feature type="sequence conflict" description="In Ref. 1; CAA58788." evidence="14" ref="1">
    <original>K</original>
    <variation>R</variation>
    <location>
        <position position="781"/>
    </location>
</feature>
<feature type="sequence conflict" description="In Ref. 1; CAA58788." evidence="14" ref="1">
    <original>N</original>
    <variation>S</variation>
    <location>
        <position position="1290"/>
    </location>
</feature>
<feature type="sequence conflict" description="In Ref. 1; CAA58788." evidence="14" ref="1">
    <original>S</original>
    <variation>T</variation>
    <location>
        <position position="1389"/>
    </location>
</feature>
<feature type="sequence conflict" description="In Ref. 1; CAA58788." evidence="14" ref="1">
    <original>A</original>
    <variation>R</variation>
    <location>
        <position position="1549"/>
    </location>
</feature>
<feature type="sequence conflict" description="In Ref. 4; AAA59917." evidence="14" ref="4">
    <original>P</original>
    <variation>L</variation>
    <location>
        <position position="1939"/>
    </location>
</feature>
<feature type="sequence conflict" description="In Ref. 1; CAA58788." evidence="14" ref="1">
    <original>M</original>
    <variation>I</variation>
    <location>
        <position position="2023"/>
    </location>
</feature>
<feature type="sequence conflict" description="In Ref. 1; CAA58788." evidence="14" ref="1">
    <original>K</original>
    <variation>Y</variation>
    <location>
        <position position="2613"/>
    </location>
</feature>
<feature type="sequence conflict" description="In Ref. 1; CAA58788." evidence="14" ref="1">
    <original>G</original>
    <variation>E</variation>
    <location>
        <position position="4039"/>
    </location>
</feature>
<feature type="sequence conflict" description="In Ref. 1; CAA58788." evidence="14" ref="1">
    <original>D</original>
    <variation>Y</variation>
    <location>
        <position position="4081"/>
    </location>
</feature>
<feature type="sequence conflict" description="In Ref. 1; CAA58788." evidence="14" ref="1">
    <original>T</original>
    <variation>P</variation>
    <location>
        <position position="6739"/>
    </location>
</feature>
<feature type="sequence conflict" description="In Ref. 1; CAA58788." evidence="14" ref="1">
    <original>K</original>
    <variation>E</variation>
    <location>
        <position position="6833"/>
    </location>
</feature>
<feature type="sequence conflict" description="In Ref. 1; CAA58788." evidence="14" ref="1">
    <original>A</original>
    <variation>P</variation>
    <location>
        <position position="8145"/>
    </location>
</feature>
<feature type="strand" evidence="16">
    <location>
        <begin position="8471"/>
        <end position="8475"/>
    </location>
</feature>
<feature type="strand" evidence="15">
    <location>
        <begin position="8480"/>
        <end position="8484"/>
    </location>
</feature>
<feature type="strand" evidence="16">
    <location>
        <begin position="8492"/>
        <end position="8508"/>
    </location>
</feature>
<feature type="turn" evidence="16">
    <location>
        <begin position="8509"/>
        <end position="8511"/>
    </location>
</feature>
<feature type="strand" evidence="16">
    <location>
        <begin position="8514"/>
        <end position="8518"/>
    </location>
</feature>
<feature type="helix" evidence="16">
    <location>
        <begin position="8519"/>
        <end position="8521"/>
    </location>
</feature>
<feature type="strand" evidence="16">
    <location>
        <begin position="8522"/>
        <end position="8524"/>
    </location>
</feature>
<keyword id="KW-0002">3D-structure</keyword>
<keyword id="KW-0009">Actin-binding</keyword>
<keyword id="KW-0025">Alternative splicing</keyword>
<keyword id="KW-0963">Cytoplasm</keyword>
<keyword id="KW-0206">Cytoskeleton</keyword>
<keyword id="KW-0225">Disease variant</keyword>
<keyword id="KW-0514">Muscle protein</keyword>
<keyword id="KW-1057">Nemaline myopathy</keyword>
<keyword id="KW-1267">Proteomics identification</keyword>
<keyword id="KW-1185">Reference proteome</keyword>
<keyword id="KW-0677">Repeat</keyword>
<keyword id="KW-0728">SH3 domain</keyword>
<reference key="1">
    <citation type="journal article" date="1995" name="J. Mol. Biol.">
        <title>The complete primary structure of human nebulin and its correlation to muscle structure.</title>
        <authorList>
            <person name="Labeit S."/>
            <person name="Kolmerer B."/>
        </authorList>
    </citation>
    <scope>NUCLEOTIDE SEQUENCE [MRNA] (ISOFORM 4)</scope>
    <scope>VARIANTS ASN-1027; HIS-1301; MET-1491; CYS-3603; THR-6102 AND VAL-8402</scope>
</reference>
<reference key="2">
    <citation type="journal article" date="2005" name="Nature">
        <title>Generation and annotation of the DNA sequences of human chromosomes 2 and 4.</title>
        <authorList>
            <person name="Hillier L.W."/>
            <person name="Graves T.A."/>
            <person name="Fulton R.S."/>
            <person name="Fulton L.A."/>
            <person name="Pepin K.H."/>
            <person name="Minx P."/>
            <person name="Wagner-McPherson C."/>
            <person name="Layman D."/>
            <person name="Wylie K."/>
            <person name="Sekhon M."/>
            <person name="Becker M.C."/>
            <person name="Fewell G.A."/>
            <person name="Delehaunty K.D."/>
            <person name="Miner T.L."/>
            <person name="Nash W.E."/>
            <person name="Kremitzki C."/>
            <person name="Oddy L."/>
            <person name="Du H."/>
            <person name="Sun H."/>
            <person name="Bradshaw-Cordum H."/>
            <person name="Ali J."/>
            <person name="Carter J."/>
            <person name="Cordes M."/>
            <person name="Harris A."/>
            <person name="Isak A."/>
            <person name="van Brunt A."/>
            <person name="Nguyen C."/>
            <person name="Du F."/>
            <person name="Courtney L."/>
            <person name="Kalicki J."/>
            <person name="Ozersky P."/>
            <person name="Abbott S."/>
            <person name="Armstrong J."/>
            <person name="Belter E.A."/>
            <person name="Caruso L."/>
            <person name="Cedroni M."/>
            <person name="Cotton M."/>
            <person name="Davidson T."/>
            <person name="Desai A."/>
            <person name="Elliott G."/>
            <person name="Erb T."/>
            <person name="Fronick C."/>
            <person name="Gaige T."/>
            <person name="Haakenson W."/>
            <person name="Haglund K."/>
            <person name="Holmes A."/>
            <person name="Harkins R."/>
            <person name="Kim K."/>
            <person name="Kruchowski S.S."/>
            <person name="Strong C.M."/>
            <person name="Grewal N."/>
            <person name="Goyea E."/>
            <person name="Hou S."/>
            <person name="Levy A."/>
            <person name="Martinka S."/>
            <person name="Mead K."/>
            <person name="McLellan M.D."/>
            <person name="Meyer R."/>
            <person name="Randall-Maher J."/>
            <person name="Tomlinson C."/>
            <person name="Dauphin-Kohlberg S."/>
            <person name="Kozlowicz-Reilly A."/>
            <person name="Shah N."/>
            <person name="Swearengen-Shahid S."/>
            <person name="Snider J."/>
            <person name="Strong J.T."/>
            <person name="Thompson J."/>
            <person name="Yoakum M."/>
            <person name="Leonard S."/>
            <person name="Pearman C."/>
            <person name="Trani L."/>
            <person name="Radionenko M."/>
            <person name="Waligorski J.E."/>
            <person name="Wang C."/>
            <person name="Rock S.M."/>
            <person name="Tin-Wollam A.-M."/>
            <person name="Maupin R."/>
            <person name="Latreille P."/>
            <person name="Wendl M.C."/>
            <person name="Yang S.-P."/>
            <person name="Pohl C."/>
            <person name="Wallis J.W."/>
            <person name="Spieth J."/>
            <person name="Bieri T.A."/>
            <person name="Berkowicz N."/>
            <person name="Nelson J.O."/>
            <person name="Osborne J."/>
            <person name="Ding L."/>
            <person name="Meyer R."/>
            <person name="Sabo A."/>
            <person name="Shotland Y."/>
            <person name="Sinha P."/>
            <person name="Wohldmann P.E."/>
            <person name="Cook L.L."/>
            <person name="Hickenbotham M.T."/>
            <person name="Eldred J."/>
            <person name="Williams D."/>
            <person name="Jones T.A."/>
            <person name="She X."/>
            <person name="Ciccarelli F.D."/>
            <person name="Izaurralde E."/>
            <person name="Taylor J."/>
            <person name="Schmutz J."/>
            <person name="Myers R.M."/>
            <person name="Cox D.R."/>
            <person name="Huang X."/>
            <person name="McPherson J.D."/>
            <person name="Mardis E.R."/>
            <person name="Clifton S.W."/>
            <person name="Warren W.C."/>
            <person name="Chinwalla A.T."/>
            <person name="Eddy S.R."/>
            <person name="Marra M.A."/>
            <person name="Ovcharenko I."/>
            <person name="Furey T.S."/>
            <person name="Miller W."/>
            <person name="Eichler E.E."/>
            <person name="Bork P."/>
            <person name="Suyama M."/>
            <person name="Torrents D."/>
            <person name="Waterston R.H."/>
            <person name="Wilson R.K."/>
        </authorList>
    </citation>
    <scope>NUCLEOTIDE SEQUENCE [LARGE SCALE GENOMIC DNA]</scope>
</reference>
<reference key="3">
    <citation type="journal article" date="1991" name="J. Biol. Chem.">
        <title>Cloning, expression, and protein interaction of human nebulin fragments composed of varying numbers of sequence modules.</title>
        <authorList>
            <person name="Jin J.P."/>
            <person name="Wang K."/>
        </authorList>
    </citation>
    <scope>NUCLEOTIDE SEQUENCE [MRNA] OF 7964-8185</scope>
</reference>
<reference key="4">
    <citation type="journal article" date="1988" name="Genomics">
        <title>Cloning and expression of human nebulin cDNAs and assignment of the gene to chromosome 2q31-q32.</title>
        <authorList>
            <person name="Zeviani M."/>
            <person name="Darras B.T."/>
            <person name="Rizzuto R."/>
            <person name="Salviati G."/>
            <person name="Betto R."/>
            <person name="Bonilla E."/>
            <person name="Miranda A.F."/>
            <person name="Du J."/>
            <person name="Samitt C."/>
            <person name="Dickson G."/>
            <person name="Walsh F.S."/>
            <person name="Dimauro S."/>
            <person name="Francke U."/>
            <person name="Schon E.A."/>
        </authorList>
    </citation>
    <scope>NUCLEOTIDE SEQUENCE [MRNA] OF 1811-1939</scope>
</reference>
<reference key="5">
    <citation type="journal article" date="2002" name="FEBS Lett.">
        <title>Interaction of nebulin SH3 domain with titin PEVK and myopalladin: implications for the signaling and assembly role of titin and nebulin.</title>
        <authorList>
            <person name="Ma K."/>
            <person name="Wang K."/>
        </authorList>
    </citation>
    <scope>INTERACTION WITH TTN</scope>
</reference>
<reference key="6">
    <citation type="journal article" date="2013" name="Mol. Biol. Cell">
        <title>Nebulin binding impedes mutant desmin filament assembly.</title>
        <authorList>
            <person name="Baker L.K."/>
            <person name="Gillis D.C."/>
            <person name="Sharma S."/>
            <person name="Ambrus A."/>
            <person name="Herrmann H."/>
            <person name="Conover G.M."/>
        </authorList>
    </citation>
    <scope>SUBUNIT</scope>
    <scope>INTERACTION WITH DES</scope>
</reference>
<reference key="7">
    <citation type="journal article" date="2013" name="Mol. Biol. Cell">
        <title>Identification of Xin-repeat proteins as novel ligands of the SH3 domains of nebulin and nebulette and analysis of their interaction during myofibril formation and remodeling.</title>
        <authorList>
            <person name="Eulitz S."/>
            <person name="Sauer F."/>
            <person name="Pelissier M.C."/>
            <person name="Boisguerin P."/>
            <person name="Molt S."/>
            <person name="Schuld J."/>
            <person name="Orfanos Z."/>
            <person name="Kley R.A."/>
            <person name="Volkmer R."/>
            <person name="Wilmanns M."/>
            <person name="Kirfel G."/>
            <person name="van der Ven P.F."/>
            <person name="Fuerst D.O."/>
        </authorList>
    </citation>
    <scope>TISSUE SPECIFICITY</scope>
</reference>
<reference key="8">
    <citation type="journal article" date="1998" name="J. Mol. Biol.">
        <title>SH3 in muscles: solution structure of the SH3 domain from nebulin.</title>
        <authorList>
            <person name="Politou A.S."/>
            <person name="Millevoi S."/>
            <person name="Gautel M."/>
            <person name="Kolmerer B."/>
            <person name="Pastore A."/>
        </authorList>
    </citation>
    <scope>STRUCTURE BY NMR OF 8466-8525</scope>
</reference>
<reference key="9">
    <citation type="journal article" date="1999" name="Proc. Natl. Acad. Sci. U.S.A.">
        <title>Mutations in the nebulin gene associated with autosomal recessive nemaline myopathy.</title>
        <authorList>
            <person name="Pelin K."/>
            <person name="Hilpelae P."/>
            <person name="Donner K."/>
            <person name="Sewry C."/>
            <person name="Akkari P.A."/>
            <person name="Wilton S.D."/>
            <person name="Wattanasirichaigoon D."/>
            <person name="Bang M.-L."/>
            <person name="Centner T."/>
            <person name="Hanefeld F."/>
            <person name="Odent S."/>
            <person name="Fardeau M."/>
            <person name="Urtizberea J.A."/>
            <person name="Muntoni F."/>
            <person name="Dubowitz V."/>
            <person name="Beggs A.H."/>
            <person name="Laing N.G."/>
            <person name="Labeit S."/>
            <person name="de la Chapelle A."/>
            <person name="Wallgren-Pettersson C."/>
        </authorList>
    </citation>
    <scope>INVOLVEMENT IN NEM2</scope>
    <scope>INVOLVEMENT IN AMC6</scope>
</reference>
<reference key="10">
    <citation type="journal article" date="2011" name="Skelet. Muscle">
        <title>Novel mutations in NEB cause abnormal nebulin expression and markedly impaired muscle force generation in severe nemaline myopathy.</title>
        <authorList>
            <person name="Lawlor M.W."/>
            <person name="Ottenheijm C.A."/>
            <person name="Lehtokari V.L."/>
            <person name="Cho K."/>
            <person name="Pelin K."/>
            <person name="Wallgren-Pettersson C."/>
            <person name="Granzier H."/>
            <person name="Beggs A.H."/>
        </authorList>
    </citation>
    <scope>INVOLVEMENT IN AMC6</scope>
</reference>
<reference key="11">
    <citation type="journal article" date="2008" name="Biochem. Biophys. Res. Commun.">
        <title>Archvillin anchors in the Z-line of skeletal muscle via the nebulin C-terminus.</title>
        <authorList>
            <person name="Lee M.-A."/>
            <person name="Joo Y.M."/>
            <person name="Lee Y.M."/>
            <person name="Kim H.S."/>
            <person name="Kim J.-H."/>
            <person name="Choi J.-K."/>
            <person name="Ahn S.-J."/>
            <person name="Min B.-I."/>
            <person name="Kim C.-R."/>
        </authorList>
    </citation>
    <scope>INTERACTION WITH SVIL</scope>
</reference>
<reference key="12">
    <citation type="journal article" date="2015" name="Orphanet J. Rare Dis.">
        <title>Next generation sequencing in a large cohort of patients presenting with neuromuscular disease before or at birth.</title>
        <authorList>
            <person name="Todd E.J."/>
            <person name="Yau K.S."/>
            <person name="Ong R."/>
            <person name="Slee J."/>
            <person name="McGillivray G."/>
            <person name="Barnett C.P."/>
            <person name="Haliloglu G."/>
            <person name="Talim B."/>
            <person name="Akcoren Z."/>
            <person name="Kariminejad A."/>
            <person name="Cairns A."/>
            <person name="Clarke N.F."/>
            <person name="Freckmann M.L."/>
            <person name="Romero N.B."/>
            <person name="Williams D."/>
            <person name="Sewry C.A."/>
            <person name="Colley A."/>
            <person name="Ryan M.M."/>
            <person name="Kiraly-Borri C."/>
            <person name="Sivadorai P."/>
            <person name="Allcock R.J."/>
            <person name="Beeson D."/>
            <person name="Maxwell S."/>
            <person name="Davis M.R."/>
            <person name="Laing N.G."/>
            <person name="Ravenscroft G."/>
        </authorList>
    </citation>
    <scope>VARIANT AMC6 974-ARG--ILE-6669 DEL</scope>
    <scope>INVOLVEMENT IN AMC6</scope>
</reference>
<reference key="13">
    <citation type="journal article" date="2018" name="Am. J. Med. Genet. A">
        <title>Arthrogryposis and pterygia as lethal end manifestations of genetically defined congenital myopathies.</title>
        <authorList>
            <person name="Ahmed A.A."/>
            <person name="Skaria P."/>
            <person name="Safina N.P."/>
            <person name="Thiffault I."/>
            <person name="Kats A."/>
            <person name="Taboada E."/>
            <person name="Habeebu S."/>
            <person name="Saunders C."/>
        </authorList>
    </citation>
    <scope>VARIANTS AMC6 6262-TYR--ILE-8525 DEL AND 6327-TYR--ILE-8525 DEL</scope>
    <scope>INVOLVEMENT IN AMC6</scope>
</reference>
<sequence length="8525" mass="986665">MADDEDYEEVVEYYTEEVVYEEVPGETITKIYETTTTRTSDYEQSETSKPALAQPALAQPASAKPVERRKVIRKKVDPSKFMTPYIAHSQKMQDLFSPNKYKEKFEKTKGQPYASTTDTPELRRIKKVQDQLSEVKYRMDGDVAKTICHVDEKAKDIEHAKKVSQQVSKVLYKQNWEDTKDKYLLPPDAPELVQAVKNTAMFSKKLYTEDWEADKSLFYPYNDSPELRRVAQAQKALSDVAYKKGLAEQQAQFTPLADPPDIEFAKKVTNQVSKQKYKEDYENKIKGKWSETPCFEVANARMNADNISTRKYQEDFENMKDQIYFMQTETPEYKMNKKAGVAASKVKYKEDYEKNKGKADYNVLPASENPQLRQLKAAGDALSDKLYKENYEKTKAKSINYCETPKFKLDTVLQNFSSDKKYKDSYLKDILGHYVGSFEDPYHSHCMKVTAQNSDKNYKAEYEEDRGKGFFPQTITQEYEAIKKLDQCKDHTYKVHPDKTKFTQVTDSPVLLQAQVNSKQLSDLNYKAKHESEKFKCHIPPDTPAFIQHKVNAYNLSDNLYKQDWEKSKAKKFDIKVDAIPLLAAKANTKNTSDVMYKKDYEKNKGKMIGVLSINDDPKMLHSLKVAKNQSDRLYKENYEKTKAKSMNYCETPKYQLDTQLKNFSEARYKDLYVKDVLGHYVGSMEDPYHTHCMKVAAQNSDKSYKAEYEEDKGKCYFPQTITQEYEAIKKLDQCKDHTYKVHPDKTKFTAVTDSPVLLQAQLNTKQLSDLNYKAKHEGEKFKCHIPADAPQFIQHRVNAYNLSDNVYKQDWEKSKAKKFDIKVDAIPLLAAKANTKNTSDVMYKKDYEKSKGKMIGALSINDDPKMLHSLKTAKNQSDREYRKDYEKSKTIYTAPLDMLQVTQAKKSQAIASDVDYKHILHSYSYPPDSINVDLAKKAYALQSDVEYKADYNSWMKGCGWVPFGSLEMEKAKRASDILNEKKYRQHPDTLKFTSIEDAPITVQSKINQAQRSDIAYKAKGEEIIHKYNLPPDLPQFIQAKVNAYNISENMYKADLKDLSKKGYDLRTDAIPIRAAKAARQAASDVQYKKDYEKAKGKMVGFQSLQDDPKLVHYMNVAKIQSDREYKKDYEKTKSKYNTPHDMFNVVAAKKAQDVVSNVNYKHSLHHYTYLPDAMDLELSKNMMQIQSDNVYKEDYNNWMKGIGWIPIGSLDVEKVKKAGDALNEKKYRQHPDTLKFTSIVDSPVMVQAKQNTKQVSDILYKAKGEDVKHKYTMSPDLPQFLQAKCNAYNISDVCYKRDWYDLIAKGNNVLGDAIPITAAKASRNIASDYKYKEAYEKSKGKHVGFRSLQDDPKLVHYMNVAKLQSDREYKKNYENTKTSYHTPGDMVSITAAKMAQDVATNVNYKQPLHHYTYLPDAMSLEHTRNVNQIQSDNVYKDEYNSFLKGIGWIPIGSLEVEKVKKAGDALNERKYRQHPDTVKFTSVPDSMGMVLAQHNTKQLSDLNYKVEGEKLKHKYTIDPELPQFIQAKVNALNMSDAHYKADWKKTIAKGYDLRPDAIPIVAAKSSRNIASDCKYKEAYEKAKGKQVGFLSLQDDPKLVHYMNVAKIQSDREYKKGYEASKTKYHTPLDMVSVTAAKKSQEVATNANYRQSYHHYTLLPDALNVEHSRNAMQIQSDNLYKSDFTNWMKGIGWVPIESLEVEKAKKAGEILSEKKYRQHPEKLKFTYAMDTMEQALNKSNKLNMDKRLYTEKWNKDKTTIHVMPDTPDILLSRVNQITMSDKLYKAGWEEEKKKGYDLRPDAIAIKAARASRDIASDYKYKKAYEQAKGKHIGFRSLEDDPKLVHFMQVAKMQSDREYKKGYEKSKTSFHTPVDMLSVVAAKKSQEVATNANYRNVIHTYNMLPDAMSFELAKNMMQIQSDNQYKADYADFMKGIGWLPLGSLEAEKNKKAMEIISEKKYRQHPDTLKYSTLMDSMNMVLAQNNAKIMNEHLYKQAWEADKTKVHIMPDIPQIILAKANAINMSDKLYKLSLEESKKKGYDLRPDAIPIKAAKASRDIASDYKYKYNYEKGKGKMVGFRSLEDDPKLVHSMQVAKMQSDREYKKNYENTKTSYHTPADMLSVTAAKDAQANITNTNYKHLIHKYILLPDAMNIELTRNMNRIQSDNEYKQDYNEWYKGLGWSPAGSLEVEKAKKATEYASDQKYRQHPSNFQFKKLTDSMDMVLAKQNAHTMNKHLYTIDWNKDKTKIHVMPDTPDILQAKQNQTLYSQKLYKLGWEEALKKGYDLPVDAISVQLAKASRDIASDYKYKQGYRKQLGHHVGFRSLQDDPKLVLSMNVAKMQSEREYKKDFEKWKTKFSSPVDMLGVVLAKKCQELVSDVDYKNYLHQWTCLPDQNDVVQAKKVYELQSENLYKSDLEWLRGIGWSPLGSLEAEKNKRASEIISEKKYRQPPDRNKFTSIPDAMDIVLAKTNAKNRSDRLYREAWDKDKTQIHIMPDTPDIVLAKANLINTSDKLYRMGYEELKRKGYDLPVDAIPIKAAKASREIASEYKYKEGFRKQLGHHIGARNIEDDPKMMWSMHVAKIQSDREYKKDFEKWKTKFSSPVDMLGVVLAKKCQTLVSDVDYKNYLHQWTCLPDQSDVIHARQAYDLQSDNLYKSDLQWLKGIGWMTSGSLEDEKNKRATQILSDHVYRQHPDQFKFSSLMDSIPMVLAKNNAITMNHRLYTEAWDKDKTTVHIMPDTPEVLLAKQNKVNYSEKLYKLGLEEAKRKGYDMRVDAIPIKAAKASRDIASEFKYKEGYRKQLGHHIGARAIRDDPKMMWSMHVAKIQSDREYKKDFEKWKTKFSSPVDMLGVVLAKKCQTLVSDVDYKNYLHQWTCLPDQSDVIHARQAYDLQSDNMYKSDLQWMRGIGWVSIGSLDVEKCKRATEILSDKIYRQPPDRFKFTSVTDSLEQVLAKNNAITMNKRLYTEAWDKDKTQIHIMPDTPEIMLARMNKINYSESLYKLANEEAKKKGYDLRSDAIPIVAAKASRDIISDYKYKDGYCKQLGHHIGARNIEDDPKMMWSMHVAKIQSDREYKKDFEKWKTKFSSPVDMLGVVLAKKCQTLVSDVDYKNYLHEWTCLPDQSDVIHARQAYDLQSDNIYKSDLQWLRGIGWVPIGSMDVVKCKRATEILSDNIYRQPPDKLKFTSVTDSLEQVLAKNNALNMNKRLYTEAWDKDKTQIHIMPDTPEIMLARQNKINYSETLYKLANEEAKKKGYDLRSDAIPIVAAKASRDVISDYKYKDGYRKQLGHHIGARNIEDDPKMMWSMHVAKIQSDREYKKDFEKWKTKFSSPVDMLGVVLAKKCQTLVSDVDYKNYLHEWTCLPDQNDVIHARQAYDLQSDNIYKSDLQWLRGIGWVPIGSMDVVKCKRAAEILSDNIYRQPPDKLKFTSVTDSLEQVLAKNNALNMNKRLYTEAWDKDKTQVHIMPDTPEIMLARQNKINYSESLYRQAMEEAKKEGYDLRSDAIPIVAAKASRDIASDYKYKEAYRKQLGHHIGARAVHDDPKIMWSLHIAKVQSDREYKKDFEKYKTRYSSPVDMLGIVLAKKCQTLVSDVDYKHPLHEWICLPDQNDIIHARKAYDLQSDNLYKSDLEWMKGIGWVPIDSLEVVRAKRAGELLSDTIYRQRPETLKFTSITDTPEQVLAKNNALNMNKRLYTEAWDNDKKTIHVMPDTPEIMLAKLNRINYSDKLYKLALEESKKEGYDLRLDAIPIQAAKASRDIASDYKYKEGYRKQLGHHIGARNIKDDPKMMWSIHVAKIQSDREYKKEFEKWKTKFSSPVDMLGVVLAKKCQILVSDIDYKHPLHEWTCLPDQNDVIQARKAYDLQSDAIYKSDLEWLRGIGWVPIGSVEVEKVKRAGEILSDRKYRQPADQLKFTCITDTPEIVLAKNNALTMSKHLYTEAWDADKTSIHVMPDTPDILLAKSNSANISQKLYTKGWDESKMKDYDLRADAISIKSAKASRDIASDYKYKEAYEKQKGHHIGAQSIEDDPKIMCAIHAGKIQSEREYKKEFQKWKTKFSSPVDMLSILLAKKCQTLVTDIDYRNYLHEWTCMPDQNDIIQAKKAYDLQSDSVYKADLEWLRGIGWMPEGSVEMNRVKVAQDLVNERLYRTRPEALSFTSIVDTPEVVLAKANSLQISEKLYQEAWNKDKSNITIPSDTPEMLQAHINALQISNKLYQKDWNDAKQKGYDIRADAIEIKHAKASREIASEYKYKEGYRKQLGHHMGFRTLQDDPKSVWAIHAAKIQSDREYKKAYEKSKGIHNTPLDMMSIVQAKKCQVLVSDIDYRNYLHQWTCLPDQNDVIQAKKAYDLQSDNLYKSDLEWLKGIGWLPEGSVEVMRVKNAQNLLNERLYRIKPEALKFTSIVDTPEVIQAKINAVQISEPLYRDAWEKEKANVNVPADTPLMLQSKINALQISNKRYQQAWEDVKMTGYDLRADAIGIQHAKASRDIASDYLYKTAYEKQKGHYIGCRSAKEDPKLVWAANVLKMQNDRLYKKAYNDHKAKISIPVDMVSISAAKEGQALASDVDYRHYLHHWSCFPDQNDVIQARKAYDLQSDSVYKADLEWLRGIGWMPEGSVEMNRVKVAQDLVNERLYRTRPEALSFTSIVDTPEVVLAKANSLQISEKLYQEAWNKDKSNITIPSDTPEMLQAHINALQISNKLYQKDWNDTKQKGYDIRADAIEIKHAKASREIASEYKYKEGYRKQLGHHMGFRTLQDDPKSVWAIHAAKIQSDREYKKAYEKSKGIHNTPLDMMSIVQAKKCQVLVSDIDYRNYLHQWTCLPDQNDVIQAKKAYDLQSDNLYKSDLEWLKGIGWLPEGSVEVMRVKNAQNLLNERLYRIKPEALKFTSIVDTPEVIQAKINAVQISEPLYRNAWEKEKANVNVPADTPLMLQSKINALQISNKRYQQAWEDVKMTGYDLRADAIGIQHAKASRDIASDYLYKTAYEKQKGHYIGCRSAKEDPKLVWAANVLKMQNDRLYKKAYNDHKAKISIPVDMVSISAAKEGQALASDVDYRHYLHHWSCFPDQNDVIQARKAYDLQSDSVYKADLEWLRGIGWMPEGSVEMNRVKVAQDLVNERLYRTRPEALSFTSIVDTPEVVLAKANSLQISEKLYQEAWNKDKSNITIPSDTPEMLQAHINALQISNKLYQKDWNDTKQKGYDIRADAIEIKHAKASREIASEYKYKEGYRKQLGHHMGFRTLQDDPKSVWAIHAAKIQSDREYKKAYEKSKGIHNTPLDMMSIVQAKKCQVLVSDIDYRNYLHQWTCLPDQNDVIQAKKAYDLQSDNLYKSDLEWLKGIGWLPEGSVEVMRVKNAQNLLNERLYRIKPEALKFTSIVDTPEVIQAKINAVQISEPLYRDAWEKEKANVNVPADTPLMLQSKINALQISNKRYQQAWEDVKMTGYDLRADAIGIQHAKASRDIASDYLYKTAYEKQKGHYIGCRSAKEDPKLVWAANVLKMQNDRLYKKAYNDHKAKISIPVDMVSISAAKEGQALASDVDYRHYLHRWSCFPDQNDVIQARKAYDLQSDALYKADLEWLRGIGWMPQGSPEVLRVKNAQNIFCDSVYRTPVVNLKYTSIVDTPEVVLAKSNAENISIPKYREVWDKDKTSIHIMPDTPEINLARANALNVSNKLYREGWDEMKAGCDVRLDAIPIQAAKASREIASDYKYKLDHEKQKGHYVGTLTARDDNKIRWALIADKLQNEREYRLDWAKWKAKIQSPVDMLSILHSKNSQALVSDMDYRNYLHQWTCMPDQNDVIQAKKAYELQSDNVYKADLEWLRGIGWMPNDSVSVNHAKHAADIFSEKKYRTKIETLNFTPVDDRVDYVTAKQSGEILDDIKYRKDWNATKSKYTLTETPLLHTAQEAARILDQYLYKEGWERQKATGYILPPDAVPFVHAHHCNDVQSELKYKAEHVKQKGHYVGVPTMRDDPKLVWFEHAGQIQNERLYKEDYHKTKAKINIPADMVSVLAAKQGQTLVSDIDYRNYLHQWMCHPDQNDVIQARKAYDLQSDNVYRADLEWLRGIGWIPLDSVDHVRVTKNQEMMSQIKYKKNALENYPNFRSVVDPPEIVLAKINSVNQSDVKYKETFNKAKGKYTFSPDTPHISHSKDMGKLYSTILYKGAWEGTKAYGYTLDERYIPIVGAKHADLVNSELKYKETYEKQKGHYLAGKVIGEFPGVVHCLDFQKMRSALNYRKHYEDTKANVHIPNDMMNHVLAKRCQYILSDLEYRHYFHQWTSLLEEPNVIRVRNAQEILSDNVYKDDLNWLKGIGCYVWDTPQILHAKKSYDLQSQLQYTAAGKENLQNYNLVTDTPLYVTAVQSGINASEVKYKENYHQIKDKYTTVLETVDYDRTRNLKNLYSSNLYKEAWDRVKATSYILPSSTLSLTHAKNQKHLASHIKYREEYEKFKALYTLPRSVDDDPNTARCLRVGKLNIDRLYRSVYEKNKMKIHIVPDMVEMVTAKDSQKKVSEIDYRLRLHEWICHPDLQVNDHVRKVTDQISDIVYKDDLNWLKGIGCYVWDTPEILHAKHAYDLRDDIKYKAHMLKTRNDYKLVTDTPVYVQAVKSGKQLSDAVYHYDYVHSVRGKVAPTTKTVDLDRALHAYKLQSSNLYKTSLRTLPTGYRLPGDTPHFKHIKDTRYMSSYFKYKEAYEHTKAYGYTLGPKDVPFVHVRRVNNVTSERLYRELYHKLKDKIHTTPDTPEIRQVKKTQEAVSELIYKSDFFKMQGHMISLPYTPQVIHCRYVGDITSDIKYKEDLQVLKGFGCFLYDTPDMVRSRHLRKLWSNYLYTDKARKMRDKYKVVLDTPEYRKVQELKTHLSELVYRAAGKKQKSIFTSVPDTPDLLRAKRGQKLQSQYLYVELATKERPHHHAGNQTTALKHAKDVKDMVSEKKYKIQYEKMKDKYTPVPDTPILIRAKRAYWNASDLRYKETFQKTKGKYHTVKDALDIVYHRKVTDDISKIKYKENYMSQLGIWRSIPDRPEHFHHRAVTDTVSDVKYKEDLTWLKGIGCYAYDTPDFTLAEKNKTLYSKYKYKEVFERTKSDFKYVADSPINRHFKYATQLMNERKYKSSAKMFLQHGCNEILRPDMLTALYNSHMWSQIKYRKNYEKSKDKFTSIVDTPEHLRTTKVNKQISDILYKLEYNKAKPRGYTTIHDTPMLLHVRKVKDEVSDLKYKEVYQRNKSNCTIEPDAVHIKAAKDAYKVNTNLDYKKQYEANKAHWKWTPDRPDFLQAAKSSLQQSDFEYKLDREFLKGCKLSVTDDKNTVLALRNTLIESDLKYKEKHVKERGTCHAVPDTPQILLAKTVSNLVSENKYKDHVKKHLAQGSYTTLPETRDTVHVKEVTKHVSDTNYKKKFVKEKGKSNYSIMLEPPEVKHAMEVAKKQSDVAYRKDAKENLHYTTVADRPDIKKATQAAKQASEVEYRAKHRKEGSHGLSMLGRPDIEMAKKAAKLSSQVKYRENFDKEKGKTPKYNPKDSQLYKVMKDANNLASEVKYKADLKKLHKPVTDMKESLIMNHVLNTSQLASSYQYKKKYEKSKGHYHTIPDNLEQLHLKEATELQSIVKYKEKYEKERGKPMLDFETPTYITAKESQQMQSGKEYRKDYEESIKGRNLTGLEVTPALLHVKYATKIASEKEYRKDLEESIRGKGLTEMEDTPDMLRAKNATQILNEKEYKRDLELEVKGRGLNAMANETPDFMRARNATDIASQIKYKQSAEMEKANFTSVVDTPEIIHAQQVKNLSSQKKYKEDAEKSMSYYETVLDTPEIQRVRENQKNFSLLQYQCDLKNSKGKITVVQDTPEILRVKENQKNFSSVLYKEDVSPGTAIGKTPEMMRVKQTQDHISSVKYKEAIGQGTPIPDLPEVKRVKETQKHISSVMYKENLGTGIPTTVTPEIERVKRNQENFSSVLYKENLGKGIPTPITPEMERVKRNQENFSSILYKENLSKGTPLPVTPEMERVKLNQENFSSVLYKENVGKGIPIPITPEMERVKHNQENFSSVLYKENLGTGIPIPITPEMQRVKHNQENLSSVLYKENMGKGTPLPVTPEMERVKHNQENISSVLYKENMGKGTPLPVTPEMERVKHNQENISSVLYKENMGKGTPLAVTPEMERVKHNQENISSVLYKENVGKATATPVTPEMQRVKRNQENISSVLYKENLGKATPTPFTPEMERVKRNQENFSSVLYKENMRKATPTPVTPEMERAKRNQENISSVLYSDSFRKQIQGKAAYVLDTPEMRRVRETQRHISTVKYHEDFEKHKGCFTPVVTDPITERVKKNMQDFSDINYRGIQRKVVEMEQKRNDQDQETITGLRVWRTNPGSVFDYDPAEDNIQSRSLHMINVQAQRRSREQSRSASALSISGGEEKSEHSEAPDHHLSTYSDGGVFAVSTAYKHAKTTELPQQRSSSVATQQTTVSSIPSHPSTAGKIFRAMYDYMAADADEVSFKDGDAIINVQAIDEGWMYGTVQRTGRTGMLPANYVEAI</sequence>
<comment type="function">
    <text>This giant muscle protein may be involved in maintaining the structural integrity of sarcomeres and the membrane system associated with the myofibrils. Binds and stabilize F-actin.</text>
</comment>
<comment type="subunit">
    <text evidence="5 6 8">Monomer and homooligomer (PubMed:23615443). Interacts with TTN/titin (PubMed:12482578). Interacts with SVIL (PubMed:18639526). Interacts (via nebulin repeats 160-164) with DES (PubMed:23615443).</text>
</comment>
<comment type="interaction">
    <interactant intactId="EBI-1049657">
        <id>P20929</id>
    </interactant>
    <interactant intactId="EBI-5353084">
        <id>O60662</id>
        <label>KLHL41</label>
    </interactant>
    <organismsDiffer>false</organismsDiffer>
    <experiments>3</experiments>
</comment>
<comment type="interaction">
    <interactant intactId="EBI-1049657">
        <id>P20929</id>
    </interactant>
    <interactant intactId="EBI-2562606">
        <id>Q86TC9</id>
        <label>MYPN</label>
    </interactant>
    <organismsDiffer>false</organismsDiffer>
    <experiments>2</experiments>
</comment>
<comment type="interaction">
    <interactant intactId="EBI-1049657">
        <id>P20929</id>
    </interactant>
    <interactant intactId="EBI-297487">
        <id>Q07889</id>
        <label>SOS1</label>
    </interactant>
    <organismsDiffer>false</organismsDiffer>
    <experiments>3</experiments>
</comment>
<comment type="interaction">
    <interactant intactId="EBI-1049657">
        <id>P20929</id>
    </interactant>
    <interactant intactId="EBI-487145">
        <id>O95425</id>
        <label>SVIL</label>
    </interactant>
    <organismsDiffer>false</organismsDiffer>
    <experiments>4</experiments>
</comment>
<comment type="interaction">
    <interactant intactId="EBI-1049657">
        <id>P20929</id>
    </interactant>
    <interactant intactId="EBI-681210">
        <id>Q8WZ42</id>
        <label>TTN</label>
    </interactant>
    <organismsDiffer>false</organismsDiffer>
    <experiments>6</experiments>
</comment>
<comment type="interaction">
    <interactant intactId="EBI-55727352">
        <id>P20929-1</id>
    </interactant>
    <interactant intactId="EBI-2799016">
        <id>O75923</id>
        <label>DYSF</label>
    </interactant>
    <organismsDiffer>false</organismsDiffer>
    <experiments>4</experiments>
</comment>
<comment type="interaction">
    <interactant intactId="EBI-55727352">
        <id>P20929-1</id>
    </interactant>
    <interactant intactId="EBI-5353084">
        <id>O60662</id>
        <label>KLHL41</label>
    </interactant>
    <organismsDiffer>false</organismsDiffer>
    <experiments>7</experiments>
</comment>
<comment type="interaction">
    <interactant intactId="EBI-9531519">
        <id>P20929-4</id>
    </interactant>
    <interactant intactId="EBI-5353084">
        <id>O60662</id>
        <label>KLHL41</label>
    </interactant>
    <organismsDiffer>false</organismsDiffer>
    <experiments>5</experiments>
</comment>
<comment type="subcellular location">
    <subcellularLocation>
        <location>Cytoplasm</location>
        <location>Myofibril</location>
        <location>Sarcomere</location>
    </subcellularLocation>
    <subcellularLocation>
        <location>Cytoplasm</location>
        <location>Cytoskeleton</location>
    </subcellularLocation>
</comment>
<comment type="alternative products">
    <event type="alternative splicing"/>
    <isoform>
        <id>P20929-2</id>
        <name>2</name>
        <sequence type="displayed"/>
    </isoform>
    <isoform>
        <id>P20929-1</id>
        <name>1</name>
        <sequence type="described" ref="VSP_062337 VSP_062338 VSP_062339 VSP_062340"/>
    </isoform>
    <isoform>
        <id>P20929-3</id>
        <name>3</name>
        <sequence type="described" ref="VSP_062339"/>
    </isoform>
    <isoform>
        <id>P20929-4</id>
        <name>4</name>
        <sequence type="described" ref="VSP_062336 VSP_062338 VSP_062339 VSP_062340"/>
    </isoform>
</comment>
<comment type="tissue specificity">
    <text evidence="9 13">Expressed in skeletal muscle (at protein level) (PubMed:23985323). Located in the thin filament of striated muscle (PubMed:9514727).</text>
</comment>
<comment type="disease" evidence="4">
    <disease id="DI-02033">
        <name>Nemaline myopathy 2</name>
        <acronym>NEM2</acronym>
        <description>A form of nemaline myopathy. Nemaline myopathies are muscular disorders characterized by muscle weakness of varying severity and onset, and abnormal thread-like or rod-shaped structures in muscle fibers on histologic examination.</description>
        <dbReference type="MIM" id="256030"/>
    </disease>
    <text>The disease is caused by variants affecting the gene represented in this entry.</text>
</comment>
<comment type="disease" evidence="4 7 10 11">
    <disease id="DI-06114">
        <name>Arthrogryposis multiplex congenita 6</name>
        <acronym>AMC6</acronym>
        <description>A form of arthrogryposis multiplex congenita, a developmental condition characterized by multiple joint contractures resulting from reduced or absent fetal movements. AMC6 is an autosomal recessive lethal form. Death usually occurs in utero or in infancy.</description>
        <dbReference type="MIM" id="619334"/>
    </disease>
    <text>The disease is caused by variants affecting the gene represented in this entry.</text>
</comment>
<accession>P20929</accession>
<accession>F8WCL5</accession>
<accession>F8WCP0</accession>
<accession>Q15346</accession>
<accession>Q53QQ2</accession>
<accession>Q53TG8</accession>